<name>PAG_BACAN</name>
<keyword id="KW-0002">3D-structure</keyword>
<keyword id="KW-0106">Calcium</keyword>
<keyword id="KW-0165">Cleavage on pair of basic residues</keyword>
<keyword id="KW-1032">Host cell membrane</keyword>
<keyword id="KW-1039">Host endosome</keyword>
<keyword id="KW-1043">Host membrane</keyword>
<keyword id="KW-0472">Membrane</keyword>
<keyword id="KW-0479">Metal-binding</keyword>
<keyword id="KW-0614">Plasmid</keyword>
<keyword id="KW-1185">Reference proteome</keyword>
<keyword id="KW-0964">Secreted</keyword>
<keyword id="KW-0732">Signal</keyword>
<keyword id="KW-0800">Toxin</keyword>
<keyword id="KW-0812">Transmembrane</keyword>
<keyword id="KW-1134">Transmembrane beta strand</keyword>
<keyword id="KW-0843">Virulence</keyword>
<evidence type="ECO:0000255" key="1">
    <source>
        <dbReference type="PROSITE-ProRule" id="PRU01164"/>
    </source>
</evidence>
<evidence type="ECO:0000256" key="2">
    <source>
        <dbReference type="SAM" id="MobiDB-lite"/>
    </source>
</evidence>
<evidence type="ECO:0000269" key="3">
    <source>
    </source>
</evidence>
<evidence type="ECO:0000269" key="4">
    <source>
    </source>
</evidence>
<evidence type="ECO:0000269" key="5">
    <source>
    </source>
</evidence>
<evidence type="ECO:0000269" key="6">
    <source>
    </source>
</evidence>
<evidence type="ECO:0000269" key="7">
    <source>
    </source>
</evidence>
<evidence type="ECO:0000269" key="8">
    <source>
    </source>
</evidence>
<evidence type="ECO:0000269" key="9">
    <source>
    </source>
</evidence>
<evidence type="ECO:0000269" key="10">
    <source>
    </source>
</evidence>
<evidence type="ECO:0000269" key="11">
    <source>
    </source>
</evidence>
<evidence type="ECO:0000269" key="12">
    <source>
    </source>
</evidence>
<evidence type="ECO:0000269" key="13">
    <source>
    </source>
</evidence>
<evidence type="ECO:0000269" key="14">
    <source>
    </source>
</evidence>
<evidence type="ECO:0000269" key="15">
    <source>
    </source>
</evidence>
<evidence type="ECO:0000269" key="16">
    <source>
    </source>
</evidence>
<evidence type="ECO:0000269" key="17">
    <source>
    </source>
</evidence>
<evidence type="ECO:0000269" key="18">
    <source>
    </source>
</evidence>
<evidence type="ECO:0000269" key="19">
    <source>
    </source>
</evidence>
<evidence type="ECO:0000269" key="20">
    <source>
    </source>
</evidence>
<evidence type="ECO:0000269" key="21">
    <source>
    </source>
</evidence>
<evidence type="ECO:0000269" key="22">
    <source>
    </source>
</evidence>
<evidence type="ECO:0000269" key="23">
    <source>
    </source>
</evidence>
<evidence type="ECO:0000269" key="24">
    <source>
    </source>
</evidence>
<evidence type="ECO:0000269" key="25">
    <source>
    </source>
</evidence>
<evidence type="ECO:0000269" key="26">
    <source>
    </source>
</evidence>
<evidence type="ECO:0000269" key="27">
    <source>
    </source>
</evidence>
<evidence type="ECO:0000269" key="28">
    <source>
    </source>
</evidence>
<evidence type="ECO:0000269" key="29">
    <source>
    </source>
</evidence>
<evidence type="ECO:0000269" key="30">
    <source>
    </source>
</evidence>
<evidence type="ECO:0000269" key="31">
    <source>
    </source>
</evidence>
<evidence type="ECO:0000269" key="32">
    <source>
    </source>
</evidence>
<evidence type="ECO:0000269" key="33">
    <source>
    </source>
</evidence>
<evidence type="ECO:0000269" key="34">
    <source>
    </source>
</evidence>
<evidence type="ECO:0000269" key="35">
    <source>
    </source>
</evidence>
<evidence type="ECO:0000269" key="36">
    <source>
    </source>
</evidence>
<evidence type="ECO:0000269" key="37">
    <source>
    </source>
</evidence>
<evidence type="ECO:0000269" key="38">
    <source>
    </source>
</evidence>
<evidence type="ECO:0000303" key="39">
    <source>
    </source>
</evidence>
<evidence type="ECO:0000303" key="40">
    <source>
    </source>
</evidence>
<evidence type="ECO:0000303" key="41">
    <source>
    </source>
</evidence>
<evidence type="ECO:0000303" key="42">
    <source>
    </source>
</evidence>
<evidence type="ECO:0000303" key="43">
    <source>
    </source>
</evidence>
<evidence type="ECO:0000305" key="44"/>
<evidence type="ECO:0000305" key="45">
    <source>
    </source>
</evidence>
<evidence type="ECO:0000305" key="46">
    <source>
    </source>
</evidence>
<evidence type="ECO:0000305" key="47">
    <source>
    </source>
</evidence>
<evidence type="ECO:0000305" key="48">
    <source>
    </source>
</evidence>
<evidence type="ECO:0000305" key="49">
    <source>
    </source>
</evidence>
<evidence type="ECO:0000305" key="50">
    <source>
    </source>
</evidence>
<evidence type="ECO:0007744" key="51">
    <source>
        <dbReference type="PDB" id="1ACC"/>
    </source>
</evidence>
<evidence type="ECO:0007744" key="52">
    <source>
        <dbReference type="PDB" id="1T6B"/>
    </source>
</evidence>
<evidence type="ECO:0007744" key="53">
    <source>
        <dbReference type="PDB" id="1TZN"/>
    </source>
</evidence>
<evidence type="ECO:0007744" key="54">
    <source>
        <dbReference type="PDB" id="1TZO"/>
    </source>
</evidence>
<evidence type="ECO:0007744" key="55">
    <source>
        <dbReference type="PDB" id="3J9C"/>
    </source>
</evidence>
<evidence type="ECO:0007744" key="56">
    <source>
        <dbReference type="PDB" id="3KWV"/>
    </source>
</evidence>
<evidence type="ECO:0007744" key="57">
    <source>
        <dbReference type="PDB" id="6PSN"/>
    </source>
</evidence>
<evidence type="ECO:0007744" key="58">
    <source>
        <dbReference type="PDB" id="6UZB"/>
    </source>
</evidence>
<evidence type="ECO:0007744" key="59">
    <source>
        <dbReference type="PDB" id="6UZD"/>
    </source>
</evidence>
<evidence type="ECO:0007744" key="60">
    <source>
        <dbReference type="PDB" id="6UZE"/>
    </source>
</evidence>
<evidence type="ECO:0007744" key="61">
    <source>
        <dbReference type="PDB" id="6VRA"/>
    </source>
</evidence>
<evidence type="ECO:0007744" key="62">
    <source>
        <dbReference type="PDB" id="6WJJ"/>
    </source>
</evidence>
<evidence type="ECO:0007744" key="63">
    <source>
        <dbReference type="PDB" id="6ZXJ"/>
    </source>
</evidence>
<evidence type="ECO:0007744" key="64">
    <source>
        <dbReference type="PDB" id="6ZXK"/>
    </source>
</evidence>
<evidence type="ECO:0007744" key="65">
    <source>
        <dbReference type="PDB" id="6ZXL"/>
    </source>
</evidence>
<evidence type="ECO:0007829" key="66">
    <source>
        <dbReference type="PDB" id="1ACC"/>
    </source>
</evidence>
<evidence type="ECO:0007829" key="67">
    <source>
        <dbReference type="PDB" id="3J9C"/>
    </source>
</evidence>
<evidence type="ECO:0007829" key="68">
    <source>
        <dbReference type="PDB" id="3KWV"/>
    </source>
</evidence>
<evidence type="ECO:0007829" key="69">
    <source>
        <dbReference type="PDB" id="3MHZ"/>
    </source>
</evidence>
<evidence type="ECO:0007829" key="70">
    <source>
        <dbReference type="PDB" id="3Q8A"/>
    </source>
</evidence>
<evidence type="ECO:0007829" key="71">
    <source>
        <dbReference type="PDB" id="3TEW"/>
    </source>
</evidence>
<evidence type="ECO:0007829" key="72">
    <source>
        <dbReference type="PDB" id="4EE2"/>
    </source>
</evidence>
<evidence type="ECO:0007829" key="73">
    <source>
        <dbReference type="PDB" id="4H2A"/>
    </source>
</evidence>
<evidence type="ECO:0007829" key="74">
    <source>
        <dbReference type="PDB" id="6UZB"/>
    </source>
</evidence>
<evidence type="ECO:0007829" key="75">
    <source>
        <dbReference type="PDB" id="6UZD"/>
    </source>
</evidence>
<evidence type="ECO:0007829" key="76">
    <source>
        <dbReference type="PDB" id="6VRA"/>
    </source>
</evidence>
<evidence type="ECO:0007829" key="77">
    <source>
        <dbReference type="PDB" id="7O85"/>
    </source>
</evidence>
<gene>
    <name type="primary">pagA</name>
    <name type="synonym">pag</name>
    <name type="ordered locus">pXO1-110</name>
    <name type="ordered locus">BXA0164</name>
    <name type="ordered locus">GBAA_pXO1_0164</name>
</gene>
<feature type="signal peptide" evidence="50">
    <location>
        <begin position="1"/>
        <end position="29"/>
    </location>
</feature>
<feature type="chain" id="PRO_0000021996" description="Protective antigen">
    <location>
        <begin position="30"/>
        <end position="764"/>
    </location>
</feature>
<feature type="chain" id="PRO_0000021997" description="Protective antigen PA-20" evidence="46 49">
    <location>
        <begin position="30"/>
        <end position="196"/>
    </location>
</feature>
<feature type="chain" id="PRO_0000021998" description="Protective antigen PA-63" evidence="46 49">
    <location>
        <begin position="197"/>
        <end position="764"/>
    </location>
</feature>
<feature type="transmembrane region" description="Beta stranded" evidence="32 33 55 57 58 59 60">
    <location>
        <begin position="331"/>
        <end position="342"/>
    </location>
</feature>
<feature type="transmembrane region" description="Beta stranded" evidence="32 33 55 57 58 59 60">
    <location>
        <begin position="345"/>
        <end position="354"/>
    </location>
</feature>
<feature type="domain" description="PA14" evidence="1">
    <location>
        <begin position="43"/>
        <end position="179"/>
    </location>
</feature>
<feature type="region of interest" description="Domain 1, calcium-binding; LF and EF binding sites" evidence="43">
    <location>
        <begin position="30"/>
        <end position="287"/>
    </location>
</feature>
<feature type="region of interest" description="Disordered" evidence="2">
    <location>
        <begin position="176"/>
        <end position="214"/>
    </location>
</feature>
<feature type="region of interest" description="Alpha-clamp" evidence="31">
    <location>
        <begin position="231"/>
        <end position="239"/>
    </location>
</feature>
<feature type="region of interest" description="Domain 2, membrane insertion and heptamerization" evidence="43">
    <location>
        <begin position="288"/>
        <end position="516"/>
    </location>
</feature>
<feature type="region of interest" description="Disordered" evidence="2">
    <location>
        <begin position="302"/>
        <end position="333"/>
    </location>
</feature>
<feature type="region of interest" description="Domain 3, heptamerization" evidence="43">
    <location>
        <begin position="517"/>
        <end position="624"/>
    </location>
</feature>
<feature type="region of interest" description="Domain 4, binding to the receptor" evidence="43">
    <location>
        <begin position="625"/>
        <end position="764"/>
    </location>
</feature>
<feature type="compositionally biased region" description="Polar residues" evidence="2">
    <location>
        <begin position="306"/>
        <end position="327"/>
    </location>
</feature>
<feature type="binding site" evidence="22 24 31 32 33 38 51 52 53 54 55 56 57 58 59 60">
    <location>
        <position position="206"/>
    </location>
    <ligand>
        <name>Ca(2+)</name>
        <dbReference type="ChEBI" id="CHEBI:29108"/>
        <label>1</label>
    </ligand>
</feature>
<feature type="binding site" evidence="22 24 31 32 33 38 51 52 53 54 55 56 57 58 59 60">
    <location>
        <position position="208"/>
    </location>
    <ligand>
        <name>Ca(2+)</name>
        <dbReference type="ChEBI" id="CHEBI:29108"/>
        <label>1</label>
    </ligand>
</feature>
<feature type="binding site" evidence="22 24 31 32 33 38 51 52 54 55 56 57 58 59 60">
    <location>
        <position position="208"/>
    </location>
    <ligand>
        <name>Ca(2+)</name>
        <dbReference type="ChEBI" id="CHEBI:29108"/>
        <label>2</label>
    </ligand>
</feature>
<feature type="binding site" evidence="22 24 31 32 33 38 51 52 53 54 55 56 57 58 59 60">
    <location>
        <position position="210"/>
    </location>
    <ligand>
        <name>Ca(2+)</name>
        <dbReference type="ChEBI" id="CHEBI:29108"/>
        <label>1</label>
    </ligand>
</feature>
<feature type="binding site" evidence="22 24 31 32 33 38 51 52 53 54 55 56 57 58 59 60">
    <location>
        <position position="210"/>
    </location>
    <ligand>
        <name>Ca(2+)</name>
        <dbReference type="ChEBI" id="CHEBI:29108"/>
        <label>2</label>
    </ligand>
</feature>
<feature type="binding site" evidence="22 24 31 32 33 38 51 52 53 54 55 56 57 58 59 60">
    <location>
        <position position="212"/>
    </location>
    <ligand>
        <name>Ca(2+)</name>
        <dbReference type="ChEBI" id="CHEBI:29108"/>
        <label>1</label>
    </ligand>
</feature>
<feature type="binding site" evidence="22 24 31 32 33 38 51 52 53 54 55 56 57 58 59 60">
    <location>
        <position position="217"/>
    </location>
    <ligand>
        <name>Ca(2+)</name>
        <dbReference type="ChEBI" id="CHEBI:29108"/>
        <label>1</label>
    </ligand>
</feature>
<feature type="binding site" evidence="24 31 32 33 51 53 54 55 56 57 58 59 60">
    <location>
        <position position="217"/>
    </location>
    <ligand>
        <name>Ca(2+)</name>
        <dbReference type="ChEBI" id="CHEBI:29108"/>
        <label>2</label>
    </ligand>
</feature>
<feature type="binding site" evidence="22 24 31 32 33 51 52 53 54 55 56 57 58 59 60">
    <location>
        <position position="251"/>
    </location>
    <ligand>
        <name>Ca(2+)</name>
        <dbReference type="ChEBI" id="CHEBI:29108"/>
        <label>2</label>
    </ligand>
</feature>
<feature type="binding site" evidence="22 24 31 32 33 51 52 53 54 55 56 57 58 59 60">
    <location>
        <position position="254"/>
    </location>
    <ligand>
        <name>Ca(2+)</name>
        <dbReference type="ChEBI" id="CHEBI:29108"/>
        <label>2</label>
    </ligand>
</feature>
<feature type="binding site" evidence="22 24 31 33 51 52 53 54 56 57 58 59 60">
    <location>
        <position position="264"/>
    </location>
    <ligand>
        <name>Ca(2+)</name>
        <dbReference type="ChEBI" id="CHEBI:29108"/>
        <label>2</label>
    </ligand>
</feature>
<feature type="site" description="Cleavage; by FURIN" evidence="8 17 26">
    <location>
        <begin position="196"/>
        <end position="197"/>
    </location>
</feature>
<feature type="site" description="Alpha-clamp" evidence="31">
    <location>
        <position position="207"/>
    </location>
</feature>
<feature type="site" description="Alpha-clamp" evidence="31">
    <location>
        <position position="216"/>
    </location>
</feature>
<feature type="site" description="Alpha-clamp" evidence="31">
    <location>
        <position position="265"/>
    </location>
</feature>
<feature type="site" description="Cleavage; by chymotrypsin; required for translocation of LF and EF" evidence="36">
    <location>
        <begin position="343"/>
        <end position="344"/>
    </location>
</feature>
<feature type="site" description="Phi-clamp" evidence="25 32">
    <location>
        <position position="456"/>
    </location>
</feature>
<feature type="site" description="Alpha-clamp" evidence="31">
    <location>
        <position position="493"/>
    </location>
</feature>
<feature type="site" description="Essential for binding to cell receptor" evidence="16">
    <location>
        <position position="712"/>
    </location>
</feature>
<feature type="sequence variant" description="In strain: PAI." evidence="20">
    <original>M</original>
    <variation>I</variation>
    <location>
        <position position="295"/>
    </location>
</feature>
<feature type="sequence variant" description="In strain: PAI." evidence="20">
    <original>N</original>
    <variation>D</variation>
    <location>
        <position position="392"/>
    </location>
</feature>
<feature type="sequence variant" description="In Sverdlovsk sample.">
    <original>F</original>
    <variation>L</variation>
    <location>
        <position position="560"/>
    </location>
</feature>
<feature type="sequence variant" description="In strain: BA1024." evidence="5">
    <original>P</original>
    <variation>S</variation>
    <location>
        <position position="565"/>
    </location>
</feature>
<feature type="sequence variant" description="In strain: BA1024, V770-NP1-R, Carbosap and Ferrara." evidence="5">
    <original>A</original>
    <variation>V</variation>
    <location>
        <position position="600"/>
    </location>
</feature>
<feature type="mutagenesis site" description="Abolished cleavage by FURIN and abolished toxin activity." evidence="17">
    <original>RKKR</original>
    <variation>SNSS</variation>
    <variation>SNKE</variation>
    <location>
        <begin position="193"/>
        <end position="196"/>
    </location>
</feature>
<feature type="mutagenesis site" description="Reduced cleavage by FURIN and reduced toxin activity." evidence="17">
    <original>R</original>
    <variation>A</variation>
    <location>
        <position position="193"/>
    </location>
</feature>
<feature type="mutagenesis site" description="Abolished cleavage by FURIN and abolished toxin activity." evidence="17">
    <original>KKR</original>
    <variation>EGG</variation>
    <location>
        <begin position="194"/>
        <end position="196"/>
    </location>
</feature>
<feature type="mutagenesis site" description="Does not affect cleavage by FURIN and does not affect toxin activity." evidence="17">
    <original>KK</original>
    <variation>AA</variation>
    <location>
        <begin position="194"/>
        <end position="195"/>
    </location>
</feature>
<feature type="mutagenesis site" description="Abolished interaction with LF." evidence="31">
    <original>R</original>
    <variation>A</variation>
    <location>
        <position position="207"/>
    </location>
</feature>
<feature type="mutagenesis site" description="Decrease in the ability to bind to LF and partially toxic at high concentrations." evidence="13">
    <original>P</original>
    <variation>A</variation>
    <location>
        <position position="213"/>
    </location>
</feature>
<feature type="mutagenesis site" description="Decrease in the ability to bind to LF and partially toxic at high concentrations." evidence="13">
    <original>L</original>
    <variation>A</variation>
    <location>
        <position position="216"/>
    </location>
</feature>
<feature type="mutagenesis site" description="Abolished interaction with LF." evidence="31">
    <original>R</original>
    <variation>S</variation>
    <location>
        <position position="229"/>
    </location>
</feature>
<feature type="mutagenesis site" description="Loss of ability to bind to LF and completely non-toxic." evidence="13">
    <original>F</original>
    <variation>A</variation>
    <location>
        <position position="231"/>
    </location>
</feature>
<feature type="mutagenesis site" description="Does not affect significantly interaction with LF, while it impairs tranlocation of LF." evidence="31">
    <original>F</original>
    <variation>S</variation>
    <location>
        <position position="231"/>
    </location>
</feature>
<feature type="mutagenesis site" description="Loss of ability to bind to LF and completely non-toxic." evidence="13">
    <original>L</original>
    <variation>A</variation>
    <location>
        <position position="232"/>
    </location>
</feature>
<feature type="mutagenesis site" description="Loss of ability to bind to LF and completely non-toxic." evidence="13">
    <original>P</original>
    <variation>A</variation>
    <location>
        <position position="234"/>
    </location>
</feature>
<feature type="mutagenesis site" description="Does not affect significantly interaction with LF." evidence="31">
    <original>P</original>
    <variation>S</variation>
    <location>
        <position position="234"/>
    </location>
</feature>
<feature type="mutagenesis site" description="Loss of ability to bind to LF and completely non-toxic." evidence="13">
    <original>I</original>
    <variation>A</variation>
    <location>
        <position position="236"/>
    </location>
</feature>
<feature type="mutagenesis site" description="Abolished interaction with LF." evidence="31">
    <original>I</original>
    <variation>S</variation>
    <location>
        <position position="236"/>
    </location>
</feature>
<feature type="mutagenesis site" description="Decrease in the ability to bind to LF and partially toxic at high concentrations." evidence="13">
    <original>I</original>
    <variation>A</variation>
    <location>
        <position position="239"/>
    </location>
</feature>
<feature type="mutagenesis site" description="Abolished interaction with LF." evidence="31">
    <original>H</original>
    <variation>A</variation>
    <location>
        <position position="240"/>
    </location>
</feature>
<feature type="mutagenesis site" description="No effect on LF-binding ability and as toxic as the wild-type." evidence="13">
    <original>W</original>
    <variation>A</variation>
    <location>
        <position position="255"/>
    </location>
</feature>
<feature type="mutagenesis site" description="No effect on LF-binding ability and as toxic as the wild-type." evidence="13">
    <original>F</original>
    <variation>A</variation>
    <location>
        <position position="265"/>
    </location>
</feature>
<feature type="mutagenesis site" description="Impaired translocation of LF." evidence="31">
    <original>F</original>
    <variation>S</variation>
    <location>
        <position position="265"/>
    </location>
</feature>
<feature type="mutagenesis site" description="Reduced toxicity in combination with lethal factor. Decreased membrane insertion and translocation of LF." evidence="10">
    <original>P</original>
    <variation>A</variation>
    <location>
        <position position="289"/>
    </location>
</feature>
<feature type="mutagenesis site" description="Decrease in toxicity probably due to slow translocation of LF." evidence="4">
    <original>FFD</original>
    <variation>AAA</variation>
    <location>
        <begin position="342"/>
        <end position="344"/>
    </location>
</feature>
<feature type="mutagenesis site" description="Loss of toxicity probably due to loss of capability to translocate LF." evidence="36">
    <location>
        <begin position="342"/>
        <end position="343"/>
    </location>
</feature>
<feature type="mutagenesis site" description="Loss of toxicity probably due to loss of capability to translocate LF." evidence="4">
    <original>F</original>
    <variation>C</variation>
    <location>
        <position position="342"/>
    </location>
</feature>
<feature type="mutagenesis site" description="Decrease in toxicity probably due to slow translocation of LF." evidence="36">
    <original>D</original>
    <variation>A</variation>
    <location>
        <position position="344"/>
    </location>
</feature>
<feature type="mutagenesis site" description="Loss of toxicity probably due to faulty membrane insertion or translocation of LF/EF into the cytosol." evidence="7">
    <original>W</original>
    <variation>A</variation>
    <location>
        <position position="375"/>
    </location>
</feature>
<feature type="mutagenesis site" description="No effect." evidence="7">
    <original>M</original>
    <variation>A</variation>
    <location>
        <position position="379"/>
    </location>
</feature>
<feature type="mutagenesis site" description="Loss of toxicity probably due to faulty membrane insertion or translocation of LF/EF into the cytosol." evidence="7">
    <original>L</original>
    <variation>A</variation>
    <location>
        <position position="381"/>
    </location>
</feature>
<feature type="mutagenesis site" description="Loss of capability to undergo conformational changes that lead to pore formation and translocation." evidence="19">
    <original>I</original>
    <variation>C</variation>
    <location>
        <position position="393"/>
    </location>
</feature>
<feature type="mutagenesis site" description="Loss of capability to undergo conformational changes that lead to pore formation and translocation." evidence="19">
    <original>T</original>
    <variation>C</variation>
    <location>
        <position position="409"/>
    </location>
</feature>
<feature type="mutagenesis site" description="Loss of capability to undergo conformational changes that lead to pore formation and translocation." evidence="19">
    <original>S</original>
    <variation>C</variation>
    <location>
        <position position="411"/>
    </location>
</feature>
<feature type="mutagenesis site" description="Loss of capability to undergo conformational changes that lead to pore formation and translocation." evidence="19">
    <original>T</original>
    <variation>C</variation>
    <location>
        <position position="422"/>
    </location>
</feature>
<feature type="mutagenesis site" description="Loss of capability to undergo conformational changes that lead to pore formation and translocation." evidence="6 19">
    <original>K</original>
    <variation>A</variation>
    <variation>D</variation>
    <location>
        <position position="426"/>
    </location>
</feature>
<feature type="mutagenesis site" description="Loss of capability to undergo conformational changes that lead to pore formation and translocation." evidence="19">
    <original>N</original>
    <variation>C</variation>
    <location>
        <position position="428"/>
    </location>
</feature>
<feature type="mutagenesis site" description="Loss of capability to undergo conformational changes that lead to pore formation and translocation." evidence="19">
    <original>Y</original>
    <variation>C</variation>
    <location>
        <position position="440"/>
    </location>
</feature>
<feature type="mutagenesis site" description="Loss of capability to undergo conformational changes that lead to pore formation and translocation." evidence="19">
    <original>N</original>
    <variation>C</variation>
    <location>
        <position position="451"/>
    </location>
</feature>
<feature type="mutagenesis site" description="Loss of capability to undergo conformational changes that lead to pore formation and translocation." evidence="6 19">
    <original>D</original>
    <variation>A</variation>
    <variation>K</variation>
    <location>
        <position position="454"/>
    </location>
</feature>
<feature type="mutagenesis site" description="Loss of capability to undergo conformational changes that lead to pore formation and translocation." evidence="6 19">
    <original>F</original>
    <variation>A</variation>
    <location>
        <position position="456"/>
    </location>
</feature>
<feature type="mutagenesis site" description="Abolished ability for mediate LF and EF protein translocation." evidence="25">
    <original>F</original>
    <variation>C</variation>
    <location>
        <position position="456"/>
    </location>
</feature>
<feature type="mutagenesis site" description="Loss of heptamerization capability." evidence="9">
    <original>Q</original>
    <variation>A</variation>
    <location>
        <position position="512"/>
    </location>
</feature>
<feature type="mutagenesis site" description="Loss of heptamerization capability." evidence="9">
    <original>D</original>
    <variation>A</variation>
    <location>
        <position position="541"/>
    </location>
</feature>
<feature type="mutagenesis site" description="Decrease in heptamerization capability." evidence="9">
    <original>L</original>
    <variation>A</variation>
    <location>
        <position position="543"/>
    </location>
</feature>
<feature type="mutagenesis site" description="Loss of toxicity due to defective oligomerization." evidence="11">
    <original>F</original>
    <variation>A</variation>
    <location>
        <position position="581"/>
    </location>
</feature>
<feature type="mutagenesis site" description="Decrease in toxicity due to defective oligomerization." evidence="11">
    <original>F</original>
    <variation>A</variation>
    <location>
        <position position="583"/>
    </location>
</feature>
<feature type="mutagenesis site" description="Loss of toxicity due to defective oligomerization." evidence="11">
    <original>I</original>
    <variation>A</variation>
    <location>
        <position position="591"/>
    </location>
</feature>
<feature type="mutagenesis site" description="Loss of toxicity due to defective oligomerization." evidence="11">
    <original>L</original>
    <variation>A</variation>
    <location>
        <position position="595"/>
    </location>
</feature>
<feature type="mutagenesis site" description="Loss of toxicity due to defective oligomerization." evidence="11">
    <original>I</original>
    <variation>A</variation>
    <location>
        <position position="603"/>
    </location>
</feature>
<feature type="mutagenesis site" description="No effect." evidence="9">
    <original>R</original>
    <variation>A</variation>
    <location>
        <position position="621"/>
    </location>
</feature>
<feature type="mutagenesis site" description="Decrease in toxicity due to decrease in cell binding." evidence="16">
    <original>N</original>
    <variation>A</variation>
    <location>
        <position position="686"/>
    </location>
</feature>
<feature type="mutagenesis site" description="No effect on toxicity." evidence="16">
    <original>K</original>
    <variation>A</variation>
    <location>
        <position position="708"/>
    </location>
</feature>
<feature type="mutagenesis site" description="Slight decrease in toxicity." evidence="16">
    <original>K</original>
    <variation>A</variation>
    <location>
        <position position="709"/>
    </location>
</feature>
<feature type="mutagenesis site" description="Great decrease in toxicity due to decrease in cell binding." evidence="16">
    <original>Y</original>
    <variation>A</variation>
    <location>
        <position position="710"/>
    </location>
</feature>
<feature type="mutagenesis site" description="Loss of toxicity due to decrease in cell binding." evidence="16">
    <original>N</original>
    <variation>A</variation>
    <location>
        <position position="711"/>
    </location>
</feature>
<feature type="mutagenesis site" description="Loss of toxicity due to decrease in cell binding." evidence="16">
    <original>D</original>
    <variation>A</variation>
    <location>
        <position position="712"/>
    </location>
</feature>
<feature type="mutagenesis site" description="No effect on toxicity." evidence="16">
    <original>K</original>
    <variation>A</variation>
    <location>
        <position position="713"/>
    </location>
</feature>
<feature type="mutagenesis site" description="No effect on toxicity." evidence="16">
    <original>L</original>
    <variation>A</variation>
    <location>
        <position position="714"/>
    </location>
</feature>
<feature type="mutagenesis site" description="Great decrease in toxicity due to decrease in cell binding." evidence="16">
    <original>P</original>
    <variation>A</variation>
    <location>
        <position position="715"/>
    </location>
</feature>
<feature type="mutagenesis site" description="Decrease in toxicity due to decrease in cell binding." evidence="16">
    <original>L</original>
    <variation>A</variation>
    <location>
        <position position="716"/>
    </location>
</feature>
<feature type="mutagenesis site" description="No effect on toxicity." evidence="16">
    <original>Y</original>
    <variation>A</variation>
    <location>
        <position position="717"/>
    </location>
</feature>
<feature type="mutagenesis site" description="Decrease in toxicity due to decrease in cell binding." evidence="16">
    <original>I</original>
    <variation>A</variation>
    <location>
        <position position="718"/>
    </location>
</feature>
<feature type="mutagenesis site" description="No effect on toxicity." evidence="4">
    <original>S</original>
    <variation>A</variation>
    <location>
        <position position="719"/>
    </location>
</feature>
<feature type="mutagenesis site" description="No effect on toxicity." evidence="16">
    <original>N</original>
    <variation>A</variation>
    <location>
        <position position="720"/>
    </location>
</feature>
<feature type="mutagenesis site" description="No effect on toxicity." evidence="16">
    <original>P</original>
    <variation>A</variation>
    <location>
        <position position="721"/>
    </location>
</feature>
<feature type="mutagenesis site" description="No effect on toxicity." evidence="16">
    <original>N</original>
    <variation>A</variation>
    <location>
        <position position="722"/>
    </location>
</feature>
<feature type="sequence conflict" description="In Ref. 1; AAA22637." evidence="44" ref="1">
    <original>Q</original>
    <variation>E</variation>
    <location>
        <position position="314"/>
    </location>
</feature>
<feature type="helix" evidence="73">
    <location>
        <begin position="41"/>
        <end position="44"/>
    </location>
</feature>
<feature type="strand" evidence="71">
    <location>
        <begin position="47"/>
        <end position="55"/>
    </location>
</feature>
<feature type="strand" evidence="71">
    <location>
        <begin position="60"/>
        <end position="71"/>
    </location>
</feature>
<feature type="helix" evidence="71">
    <location>
        <begin position="76"/>
        <end position="78"/>
    </location>
</feature>
<feature type="helix" evidence="71">
    <location>
        <begin position="84"/>
        <end position="86"/>
    </location>
</feature>
<feature type="strand" evidence="71">
    <location>
        <begin position="91"/>
        <end position="99"/>
    </location>
</feature>
<feature type="strand" evidence="71">
    <location>
        <begin position="104"/>
        <end position="110"/>
    </location>
</feature>
<feature type="helix" evidence="71">
    <location>
        <begin position="113"/>
        <end position="115"/>
    </location>
</feature>
<feature type="strand" evidence="71">
    <location>
        <begin position="116"/>
        <end position="120"/>
    </location>
</feature>
<feature type="strand" evidence="71">
    <location>
        <begin position="123"/>
        <end position="129"/>
    </location>
</feature>
<feature type="strand" evidence="71">
    <location>
        <begin position="135"/>
        <end position="137"/>
    </location>
</feature>
<feature type="strand" evidence="71">
    <location>
        <begin position="142"/>
        <end position="150"/>
    </location>
</feature>
<feature type="strand" evidence="71">
    <location>
        <begin position="155"/>
        <end position="159"/>
    </location>
</feature>
<feature type="strand" evidence="71">
    <location>
        <begin position="162"/>
        <end position="166"/>
    </location>
</feature>
<feature type="strand" evidence="66">
    <location>
        <begin position="168"/>
        <end position="170"/>
    </location>
</feature>
<feature type="strand" evidence="71">
    <location>
        <begin position="172"/>
        <end position="174"/>
    </location>
</feature>
<feature type="helix" evidence="71">
    <location>
        <begin position="177"/>
        <end position="179"/>
    </location>
</feature>
<feature type="strand" evidence="71">
    <location>
        <begin position="186"/>
        <end position="188"/>
    </location>
</feature>
<feature type="strand" evidence="73">
    <location>
        <begin position="191"/>
        <end position="193"/>
    </location>
</feature>
<feature type="strand" evidence="71">
    <location>
        <begin position="199"/>
        <end position="201"/>
    </location>
</feature>
<feature type="strand" evidence="71">
    <location>
        <begin position="210"/>
        <end position="212"/>
    </location>
</feature>
<feature type="helix" evidence="71">
    <location>
        <begin position="214"/>
        <end position="219"/>
    </location>
</feature>
<feature type="strand" evidence="71">
    <location>
        <begin position="221"/>
        <end position="225"/>
    </location>
</feature>
<feature type="strand" evidence="71">
    <location>
        <begin position="230"/>
        <end position="234"/>
    </location>
</feature>
<feature type="helix" evidence="71">
    <location>
        <begin position="237"/>
        <end position="240"/>
    </location>
</feature>
<feature type="turn" evidence="71">
    <location>
        <begin position="241"/>
        <end position="244"/>
    </location>
</feature>
<feature type="strand" evidence="70">
    <location>
        <begin position="255"/>
        <end position="258"/>
    </location>
</feature>
<feature type="strand" evidence="71">
    <location>
        <begin position="259"/>
        <end position="262"/>
    </location>
</feature>
<feature type="helix" evidence="71">
    <location>
        <begin position="264"/>
        <end position="269"/>
    </location>
</feature>
<feature type="helix" evidence="71">
    <location>
        <begin position="278"/>
        <end position="281"/>
    </location>
</feature>
<feature type="strand" evidence="71">
    <location>
        <begin position="291"/>
        <end position="302"/>
    </location>
</feature>
<feature type="strand" evidence="76">
    <location>
        <begin position="314"/>
        <end position="316"/>
    </location>
</feature>
<feature type="strand" evidence="71">
    <location>
        <begin position="318"/>
        <end position="326"/>
    </location>
</feature>
<feature type="strand" evidence="67">
    <location>
        <begin position="331"/>
        <end position="340"/>
    </location>
</feature>
<feature type="strand" evidence="74">
    <location>
        <begin position="341"/>
        <end position="343"/>
    </location>
</feature>
<feature type="strand" evidence="67">
    <location>
        <begin position="345"/>
        <end position="354"/>
    </location>
</feature>
<feature type="strand" evidence="71">
    <location>
        <begin position="357"/>
        <end position="363"/>
    </location>
</feature>
<feature type="strand" evidence="71">
    <location>
        <begin position="369"/>
        <end position="371"/>
    </location>
</feature>
<feature type="helix" evidence="71">
    <location>
        <begin position="375"/>
        <end position="379"/>
    </location>
</feature>
<feature type="strand" evidence="67">
    <location>
        <begin position="383"/>
        <end position="385"/>
    </location>
</feature>
<feature type="strand" evidence="71">
    <location>
        <begin position="386"/>
        <end position="397"/>
    </location>
</feature>
<feature type="strand" evidence="71">
    <location>
        <begin position="399"/>
        <end position="401"/>
    </location>
</feature>
<feature type="strand" evidence="72">
    <location>
        <begin position="403"/>
        <end position="405"/>
    </location>
</feature>
<feature type="strand" evidence="71">
    <location>
        <begin position="410"/>
        <end position="414"/>
    </location>
</feature>
<feature type="turn" evidence="71">
    <location>
        <begin position="415"/>
        <end position="417"/>
    </location>
</feature>
<feature type="strand" evidence="71">
    <location>
        <begin position="418"/>
        <end position="423"/>
    </location>
</feature>
<feature type="turn" evidence="67">
    <location>
        <begin position="427"/>
        <end position="429"/>
    </location>
</feature>
<feature type="strand" evidence="74">
    <location>
        <begin position="431"/>
        <end position="434"/>
    </location>
</feature>
<feature type="strand" evidence="71">
    <location>
        <begin position="438"/>
        <end position="441"/>
    </location>
</feature>
<feature type="strand" evidence="71">
    <location>
        <begin position="448"/>
        <end position="451"/>
    </location>
</feature>
<feature type="strand" evidence="68">
    <location>
        <begin position="456"/>
        <end position="458"/>
    </location>
</feature>
<feature type="strand" evidence="71">
    <location>
        <begin position="461"/>
        <end position="464"/>
    </location>
</feature>
<feature type="helix" evidence="71">
    <location>
        <begin position="465"/>
        <end position="474"/>
    </location>
</feature>
<feature type="strand" evidence="71">
    <location>
        <begin position="476"/>
        <end position="481"/>
    </location>
</feature>
<feature type="strand" evidence="71">
    <location>
        <begin position="487"/>
        <end position="492"/>
    </location>
</feature>
<feature type="turn" evidence="71">
    <location>
        <begin position="493"/>
        <end position="496"/>
    </location>
</feature>
<feature type="strand" evidence="71">
    <location>
        <begin position="497"/>
        <end position="505"/>
    </location>
</feature>
<feature type="helix" evidence="71">
    <location>
        <begin position="506"/>
        <end position="508"/>
    </location>
</feature>
<feature type="helix" evidence="71">
    <location>
        <begin position="510"/>
        <end position="516"/>
    </location>
</feature>
<feature type="strand" evidence="71">
    <location>
        <begin position="517"/>
        <end position="522"/>
    </location>
</feature>
<feature type="turn" evidence="71">
    <location>
        <begin position="524"/>
        <end position="527"/>
    </location>
</feature>
<feature type="strand" evidence="71">
    <location>
        <begin position="530"/>
        <end position="535"/>
    </location>
</feature>
<feature type="strand" evidence="77">
    <location>
        <begin position="539"/>
        <end position="541"/>
    </location>
</feature>
<feature type="helix" evidence="71">
    <location>
        <begin position="542"/>
        <end position="546"/>
    </location>
</feature>
<feature type="helix" evidence="71">
    <location>
        <begin position="552"/>
        <end position="560"/>
    </location>
</feature>
<feature type="strand" evidence="69">
    <location>
        <begin position="565"/>
        <end position="568"/>
    </location>
</feature>
<feature type="strand" evidence="75">
    <location>
        <begin position="570"/>
        <end position="575"/>
    </location>
</feature>
<feature type="helix" evidence="71">
    <location>
        <begin position="576"/>
        <end position="578"/>
    </location>
</feature>
<feature type="strand" evidence="71">
    <location>
        <begin position="579"/>
        <end position="583"/>
    </location>
</feature>
<feature type="helix" evidence="71">
    <location>
        <begin position="585"/>
        <end position="597"/>
    </location>
</feature>
<feature type="helix" evidence="71">
    <location>
        <begin position="603"/>
        <end position="605"/>
    </location>
</feature>
<feature type="turn" evidence="71">
    <location>
        <begin position="607"/>
        <end position="609"/>
    </location>
</feature>
<feature type="strand" evidence="69">
    <location>
        <begin position="611"/>
        <end position="613"/>
    </location>
</feature>
<feature type="strand" evidence="71">
    <location>
        <begin position="617"/>
        <end position="622"/>
    </location>
</feature>
<feature type="strand" evidence="71">
    <location>
        <begin position="625"/>
        <end position="627"/>
    </location>
</feature>
<feature type="strand" evidence="71">
    <location>
        <begin position="633"/>
        <end position="636"/>
    </location>
</feature>
<feature type="helix" evidence="71">
    <location>
        <begin position="638"/>
        <end position="644"/>
    </location>
</feature>
<feature type="strand" evidence="71">
    <location>
        <begin position="648"/>
        <end position="652"/>
    </location>
</feature>
<feature type="strand" evidence="71">
    <location>
        <begin position="655"/>
        <end position="658"/>
    </location>
</feature>
<feature type="helix" evidence="71">
    <location>
        <begin position="662"/>
        <end position="666"/>
    </location>
</feature>
<feature type="strand" evidence="71">
    <location>
        <begin position="668"/>
        <end position="676"/>
    </location>
</feature>
<feature type="strand" evidence="68">
    <location>
        <begin position="678"/>
        <end position="680"/>
    </location>
</feature>
<feature type="strand" evidence="71">
    <location>
        <begin position="682"/>
        <end position="684"/>
    </location>
</feature>
<feature type="helix" evidence="72">
    <location>
        <begin position="689"/>
        <end position="691"/>
    </location>
</feature>
<feature type="strand" evidence="71">
    <location>
        <begin position="695"/>
        <end position="697"/>
    </location>
</feature>
<feature type="turn" evidence="68">
    <location>
        <begin position="699"/>
        <end position="701"/>
    </location>
</feature>
<feature type="strand" evidence="71">
    <location>
        <begin position="703"/>
        <end position="708"/>
    </location>
</feature>
<feature type="turn" evidence="71">
    <location>
        <begin position="709"/>
        <end position="713"/>
    </location>
</feature>
<feature type="strand" evidence="71">
    <location>
        <begin position="723"/>
        <end position="731"/>
    </location>
</feature>
<feature type="helix" evidence="71">
    <location>
        <begin position="732"/>
        <end position="734"/>
    </location>
</feature>
<feature type="strand" evidence="66">
    <location>
        <begin position="741"/>
        <end position="743"/>
    </location>
</feature>
<feature type="strand" evidence="71">
    <location>
        <begin position="753"/>
        <end position="759"/>
    </location>
</feature>
<feature type="helix" evidence="71">
    <location>
        <begin position="760"/>
        <end position="763"/>
    </location>
</feature>
<accession>P13423</accession>
<accession>Q937W2</accession>
<accession>Q937W3</accession>
<accession>Q9F5R7</accession>
<accession>Q9KH69</accession>
<accession>Q9RQU2</accession>
<protein>
    <recommendedName>
        <fullName evidence="41">Protective antigen</fullName>
        <shortName evidence="41">PA</shortName>
    </recommendedName>
    <alternativeName>
        <fullName evidence="44">Anthrax toxins translocating protein</fullName>
    </alternativeName>
    <alternativeName>
        <fullName evidence="42">PA-83</fullName>
        <shortName evidence="42">PA83</shortName>
    </alternativeName>
    <component>
        <recommendedName>
            <fullName evidence="44">Protective antigen PA-20</fullName>
            <shortName evidence="39 42">PA-20</shortName>
            <shortName evidence="39 42">PA20</shortName>
        </recommendedName>
    </component>
    <component>
        <recommendedName>
            <fullName evidence="44">Protective antigen PA-63</fullName>
            <shortName evidence="39 42">PA-63</shortName>
            <shortName evidence="39 42">PA63</shortName>
        </recommendedName>
    </component>
</protein>
<sequence>MKKRKVLIPLMALSTILVSSTGNLEVIQAEVKQENRLLNESESSSQGLLGYYFSDLNFQAPMVVTSSTTGDLSIPSSELENIPSENQYFQSAIWSGFIKVKKSDEYTFATSADNHVTMWVDDQEVINKASNSNKIRLEKGRLYQIKIQYQRENPTEKGLDFKLYWTDSQNKKEVISSDNLQLPELKQKSSNSRKKRSTSAGPTVPDRDNDGIPDSLEVEGYTVDVKNKRTFLSPWISNIHEKKGLTKYKSSPEKWSTASDPYSDFEKVTGRIDKNVSPEARHPLVAAYPIVHVDMENIILSKNEDQSTQNTDSQTRTISKNTSTSRTHTSEVHGNAEVHASFFDIGGSVSAGFSNSNSSTVAIDHSLSLAGERTWAETMGLNTADTARLNANIRYVNTGTAPIYNVLPTTSLVLGKNQTLATIKAKENQLSQILAPNNYYPSKNLAPIALNAQDDFSSTPITMNYNQFLELEKTKQLRLDTDQVYGNIATYNFENGRVRVDTGSNWSEVLPQIQETTARIIFNGKDLNLVERRIAAVNPSDPLETTKPDMTLKEALKIAFGFNEPNGNLQYQGKDITEFDFNFDQQTSQNIKNQLAELNATNIYTVLDKIKLNAKMNILIRDKRFHYDRNNIAVGADESVVKEAHREVINSSTEGLLLNIDKDIRKILSGYIVEIEDTEGLKEVINDRYDMLNISSLRQDGKTFIDFKKYNDKLPLYISNPNYKVNVYAVTKENTIINPSENGDTSTNGIKKILIFSKKGYEIG</sequence>
<proteinExistence type="evidence at protein level"/>
<comment type="function">
    <text evidence="12 18 22 24 27 40">Protective antigen constitutes one of the three proteins composing the anthrax toxin; it mediates attachment to host cells and translocation of edema factor (EF) and lethal factor (LF) into the host cytoplasm (PubMed:11700562, PubMed:14507921, PubMed:15243628, PubMed:15326297). PA associated with LF forms the lethal toxin (LeTx) and causes death when injected; PA associated with EF forms the edema toxin (EdTx) and produces edema (PubMed:1651334). PA induces immunity to infection with anthrax (PubMed:11544370).</text>
</comment>
<comment type="function">
    <molecule>Protective antigen</molecule>
    <text evidence="12 18 22 24">Mediates the attachment to host cells by binding host cell receptors ANTXR1 and ANTXR2 (PubMed:11700562, PubMed:14507921, PubMed:15243628, PubMed:15326297). Following host cell surface attachment, PA is cleaved by FURIN to generate the PA-63 (Protective antigen PA-63) form, which constitutes the mature form of the protein that oligomerizes and forms a pore to translocate the enzymatic toxin components edema factor (EF) and lethal factor (LF) into the host cytosol (PubMed:11700562, PubMed:15243628, PubMed:15326297).</text>
</comment>
<comment type="function">
    <molecule>Protective antigen PA-63</molecule>
    <text evidence="3 13 14 22 23 24 25 29 31 33 34 35">Mature form that oligomerizes and forms a pore to translocate the enzymatic toxin components edema factor (EF) and lethal factor (LF) into the host cytosol (PubMed:15243628, PubMed:15326297). Following attachment to host cell receptors and cleavage by FURIN, homooligomerizes to form ring-shaped oligomers that are in a pre-pore conformation, and associates with EF and LF (PubMed:10085027, PubMed:12117959, PubMed:15313199). Toxin-leaded complexes are then endocytosed in a clathrin-dependent process, followed by a conformational change of oligomerized PA-63 from the pre-pore to pore state, which is triggered by the low pH in the endosome (PubMed:10085027, PubMed:12551953, PubMed:15326297, PubMed:20221438). Once active, the pore mediates unfolding of EF and LF, which pass through the pore and translocate into the host cytosol (PubMed:16051798, PubMed:21037566, PubMed:32047164, PubMed:32521227, PubMed:32810181).</text>
</comment>
<comment type="subunit">
    <molecule>Protective antigen</molecule>
    <text evidence="12 18 22 24">Interacts with host ANTXR1 and ANTXR2.</text>
</comment>
<comment type="subunit">
    <molecule>Protective antigen PA-63</molecule>
    <text evidence="3 13 23 25 28 30 31 32 33 34 35">Homooligomer; homooligomerizes to form homoheptamers (PA-63(7)) or homooctamers (PA-63(8)) (PubMed:10085027, PubMed:16051798, PubMed:19627991, PubMed:20433851, PubMed:25778700, PubMed:32810181). PA-63(7) or PA-63(8) form ring-shaped oligomers that are in a pre-pore conformation, which do not penetrate the host membrane (PubMed:19627991, PubMed:20433851, PubMed:32810181). PA-63(8) displays an enhanced stability, suggesting that this form circulates in the blood to reach and exert toxicity even in distant tissues (PubMed:20433851). Interacts with lethal factor (LF) and edema factor (EF); can bind LF and EF simultaneously and interaction takes place following homooligomerization on the host cell membrane (PubMed:10085027, PubMed:12117959, PubMed:15313199, PubMed:21037566, PubMed:32047164, PubMed:32521227, PubMed:32810181). PA-63(7) homoheptamer interacts with three molecules of LF to form the PA(7)LF(3) complex, in which the relative position of the N-terminal alpha-helices in the three LFs determines which factor is translocated first (PubMed:32810181).</text>
</comment>
<comment type="interaction">
    <interactant intactId="EBI-456868">
        <id>P13423</id>
    </interactant>
    <interactant intactId="EBI-456923">
        <id>P15917</id>
        <label>lef</label>
    </interactant>
    <organismsDiffer>false</organismsDiffer>
    <experiments>28</experiments>
</comment>
<comment type="interaction">
    <interactant intactId="EBI-456868">
        <id>P13423</id>
    </interactant>
    <interactant intactId="EBI-456868">
        <id>P13423</id>
        <label>pagA</label>
    </interactant>
    <organismsDiffer>false</organismsDiffer>
    <experiments>16</experiments>
</comment>
<comment type="interaction">
    <interactant intactId="EBI-456868">
        <id>P13423</id>
    </interactant>
    <interactant intactId="EBI-905659">
        <id>Q9H6X2-2</id>
        <label>ANTXR1</label>
    </interactant>
    <organismsDiffer>true</organismsDiffer>
    <experiments>3</experiments>
</comment>
<comment type="interaction">
    <interactant intactId="EBI-456868">
        <id>P13423</id>
    </interactant>
    <interactant intactId="EBI-456840">
        <id>P58335</id>
        <label>ANTXR2</label>
    </interactant>
    <organismsDiffer>true</organismsDiffer>
    <experiments>7</experiments>
</comment>
<comment type="interaction">
    <interactant intactId="EBI-456868">
        <id>P13423</id>
    </interactant>
    <interactant intactId="EBI-543750">
        <id>P0A6F5</id>
        <label>groEL</label>
    </interactant>
    <organismsDiffer>true</organismsDiffer>
    <experiments>2</experiments>
</comment>
<comment type="subcellular location">
    <molecule>Protective antigen</molecule>
    <subcellularLocation>
        <location evidence="8 15">Secreted</location>
    </subcellularLocation>
    <subcellularLocation>
        <location evidence="12 18">Host cell membrane</location>
    </subcellularLocation>
    <text evidence="12 15 18">Secreted through the Sec-dependent secretion pathway (PubMed:12606539). Therefore, PA is translocated across the membrane in an unfolded state and then it is folded into its native configuration on the trans side of the membrane, prior to its release to the environment (PubMed:12606539). PA requires the extracellular chaperone PrsA for efficient folding (PubMed:12606539). It circulates in the host blood and binds host cell receptors at the cell surface (PubMed:11700562, PubMed:14507921).</text>
</comment>
<comment type="subcellular location">
    <molecule>Protective antigen PA-63</molecule>
    <subcellularLocation>
        <location evidence="47 48">Host cell membrane</location>
        <topology evidence="32 33">Multi-pass membrane protein</topology>
    </subcellularLocation>
    <subcellularLocation>
        <location evidence="45">Host endosome membrane</location>
        <topology evidence="32 33">Multi-pass membrane protein</topology>
    </subcellularLocation>
    <text evidence="3 23 24">Following attachment to host cell receptors at the cell surface and cleavage by FURIN, homooligomerizes to form ring-shaped oligomers that are in a pre-pore conformation, and associates with EF and LF (PubMed:15313199). Loaded complexes are then endocytosed in a clathrin-dependent process, followed by a conformational change of oligomerized PA-63 from the pre-pore to pore state, which is triggered by the low pH in the endosome (PubMed:10085027, PubMed:15326297).</text>
</comment>
<comment type="domain">
    <text evidence="4 8 9 10 16 21 27 36 37 38">The molecule is folded into four functional domains (PubMed:1651334, PubMed:9039918). Each domain is required for a particular step in the toxicity process (PubMed:1651334). Domain 1 contains two calcium ions and the proteolytic activation site (PubMed:1651334). Cleavage of the PA monomer releases the subdomain 1a, which is the N-terminal fragment of 20-kDa (PA-20) (PubMed:11207581, PubMed:8051159, PubMed:9039918). The subdomain 1b is part of the remaining 63-kDa fragment (PA-63) and contains the binding sites for LP and EF (PubMed:11207581, PubMed:8051159, PubMed:9039918). Domain 2 is a beta-barrel core containing a large flexible loop that has been implicated in membrane insertion and pore formation (PubMed:11356563, PubMed:1651334, PubMed:9039918). There is a chymotrypsin cleavage site in this loop that is required for toxicity (PubMed:1512256, PubMed:7961869, PubMed:9039918). Domain 3 has a hydrophobic patch thought to be involved in protein-protein interactions (PubMed:11222612, PubMed:1651334, PubMed:9039918). Domain 4 appears to be a separate domain and shows limited contact with the other three domains: it would swing out of the way during membrane insertion (PubMed:10085028, PubMed:12771151, PubMed:1651334, PubMed:9039918). It is required for binding to the receptor; the small loop is involved in receptor recognition (PubMed:10085028, PubMed:12771151, PubMed:1651334, PubMed:9039918).</text>
</comment>
<comment type="domain">
    <molecule>Protective antigen PA-63</molecule>
    <text evidence="25 32">Phe-456 residue forms the phi-clamp in the pore and catalyzes protein translocation via a charge-state-dependent Brownian ratchet (PubMed:16051798, PubMed:25778700). During conversion of the heptameric pre-pore precursor to the pore, the seven Phe-427 residues converge within the lumen to generate the narrowest point in the channel lumen (6 Angstroms in width) (PubMed:16051798, PubMed:25778700). To pass through this hydrophobic restriction, substrate proteins LF and EF need to be unfolded prior to translocation (PubMed:25778700).</text>
</comment>
<comment type="domain">
    <molecule>Protective antigen PA-63</molecule>
    <text evidence="31 33 34">The alpha-clamp consists in an amphipathic cleft between two adjacent PA protomers, which assists the unfolding of substrate proteins LF and EF (PubMed:21037566, PubMed:32047164, PubMed:32521227). The alpha-clamp binds non-specifically to alpha-helices of substrate proteins LF and EF (PubMed:21037566, PubMed:32047164, PubMed:32521227).</text>
</comment>
<comment type="PTM">
    <text evidence="8 17 26 37">Proteolytic activation by FURIN cleaves the protein in two parts, PA-20 and PA-63; the latter is the mature protein (PubMed:11207581, PubMed:1438214, PubMed:1644824, PubMed:8051159). The cleavage occurs at the cell surface and probably in the serum of infected animals as well; both native and cleaved PA are able to bind to the cell receptor (PubMed:11207581, PubMed:8051159). The release of PA-20 from the remaining receptor-bound PA-63 exposes the binding site for EF and LF, and promotes oligomerization and internalization of the protein (PubMed:11207581, PubMed:8051159).</text>
</comment>
<comment type="similarity">
    <text evidence="44">Belongs to the bacterial binary toxin family.</text>
</comment>
<dbReference type="EMBL" id="M22589">
    <property type="protein sequence ID" value="AAA22637.1"/>
    <property type="molecule type" value="Genomic_DNA"/>
</dbReference>
<dbReference type="EMBL" id="AF306778">
    <property type="protein sequence ID" value="AAG24446.1"/>
    <property type="molecule type" value="Genomic_DNA"/>
</dbReference>
<dbReference type="EMBL" id="AF306779">
    <property type="protein sequence ID" value="AAG24447.1"/>
    <property type="molecule type" value="Genomic_DNA"/>
</dbReference>
<dbReference type="EMBL" id="AF306780">
    <property type="protein sequence ID" value="AAG24448.1"/>
    <property type="molecule type" value="Genomic_DNA"/>
</dbReference>
<dbReference type="EMBL" id="AF306781">
    <property type="protein sequence ID" value="AAG24449.1"/>
    <property type="molecule type" value="Genomic_DNA"/>
</dbReference>
<dbReference type="EMBL" id="AF306782">
    <property type="protein sequence ID" value="AAG24450.1"/>
    <property type="molecule type" value="Genomic_DNA"/>
</dbReference>
<dbReference type="EMBL" id="AF306783">
    <property type="protein sequence ID" value="AAG24451.1"/>
    <property type="molecule type" value="Genomic_DNA"/>
</dbReference>
<dbReference type="EMBL" id="AF268967">
    <property type="protein sequence ID" value="AAF86457.1"/>
    <property type="molecule type" value="Genomic_DNA"/>
</dbReference>
<dbReference type="EMBL" id="AF065404">
    <property type="protein sequence ID" value="AAD32414.1"/>
    <property type="molecule type" value="Genomic_DNA"/>
</dbReference>
<dbReference type="EMBL" id="AE011190">
    <property type="protein sequence ID" value="AAM26109.1"/>
    <property type="molecule type" value="Genomic_DNA"/>
</dbReference>
<dbReference type="EMBL" id="AE017336">
    <property type="protein sequence ID" value="AAT28905.2"/>
    <property type="molecule type" value="Genomic_DNA"/>
</dbReference>
<dbReference type="EMBL" id="AJ413936">
    <property type="protein sequence ID" value="CAC93934.1"/>
    <property type="molecule type" value="Genomic_DNA"/>
</dbReference>
<dbReference type="EMBL" id="AJ413937">
    <property type="protein sequence ID" value="CAC93935.1"/>
    <property type="molecule type" value="Genomic_DNA"/>
</dbReference>
<dbReference type="EMBL" id="AB125961">
    <property type="protein sequence ID" value="BAD14937.1"/>
    <property type="molecule type" value="Genomic_DNA"/>
</dbReference>
<dbReference type="PIR" id="I39934">
    <property type="entry name" value="I39934"/>
</dbReference>
<dbReference type="RefSeq" id="NP_052806.1">
    <property type="nucleotide sequence ID" value="NC_001496.1"/>
</dbReference>
<dbReference type="RefSeq" id="WP_000746486.1">
    <property type="nucleotide sequence ID" value="NZ_VLYK01000020.1"/>
</dbReference>
<dbReference type="RefSeq" id="WP_000746487.1">
    <property type="nucleotide sequence ID" value="NZ_VLYO01000014.1"/>
</dbReference>
<dbReference type="RefSeq" id="WP_000746488.1">
    <property type="nucleotide sequence ID" value="NZ_VTZH01000015.1"/>
</dbReference>
<dbReference type="PDB" id="1ACC">
    <property type="method" value="X-ray"/>
    <property type="resolution" value="2.10 A"/>
    <property type="chains" value="A=30-764"/>
</dbReference>
<dbReference type="PDB" id="1T6B">
    <property type="method" value="X-ray"/>
    <property type="resolution" value="2.50 A"/>
    <property type="chains" value="X=30-764"/>
</dbReference>
<dbReference type="PDB" id="1TZN">
    <property type="method" value="X-ray"/>
    <property type="resolution" value="4.30 A"/>
    <property type="chains" value="A/B/C/D/E/F/G/H/I/J/K/L/M/O=203-764"/>
</dbReference>
<dbReference type="PDB" id="1TZO">
    <property type="method" value="X-ray"/>
    <property type="resolution" value="3.60 A"/>
    <property type="chains" value="A/B/C/D/E/F/G/H/I/J/K/L/M/O=203-764"/>
</dbReference>
<dbReference type="PDB" id="3ETB">
    <property type="method" value="X-ray"/>
    <property type="resolution" value="3.80 A"/>
    <property type="chains" value="J/K/L/M=621-764"/>
</dbReference>
<dbReference type="PDB" id="3INO">
    <property type="method" value="X-ray"/>
    <property type="resolution" value="1.95 A"/>
    <property type="chains" value="A/B=624-764"/>
</dbReference>
<dbReference type="PDB" id="3J9C">
    <property type="method" value="EM"/>
    <property type="resolution" value="2.90 A"/>
    <property type="chains" value="A=203-764"/>
</dbReference>
<dbReference type="PDB" id="3KWV">
    <property type="method" value="X-ray"/>
    <property type="resolution" value="3.10 A"/>
    <property type="chains" value="A/B/D/E=197-764"/>
</dbReference>
<dbReference type="PDB" id="3MHZ">
    <property type="method" value="X-ray"/>
    <property type="resolution" value="1.70 A"/>
    <property type="chains" value="A=30-764"/>
</dbReference>
<dbReference type="PDB" id="3Q8A">
    <property type="method" value="X-ray"/>
    <property type="resolution" value="3.13 A"/>
    <property type="chains" value="A=30-764"/>
</dbReference>
<dbReference type="PDB" id="3Q8B">
    <property type="method" value="X-ray"/>
    <property type="resolution" value="2.00 A"/>
    <property type="chains" value="A=30-764"/>
</dbReference>
<dbReference type="PDB" id="3Q8C">
    <property type="method" value="X-ray"/>
    <property type="resolution" value="2.85 A"/>
    <property type="chains" value="A=30-764"/>
</dbReference>
<dbReference type="PDB" id="3Q8E">
    <property type="method" value="X-ray"/>
    <property type="resolution" value="2.10 A"/>
    <property type="chains" value="A=30-764"/>
</dbReference>
<dbReference type="PDB" id="3Q8F">
    <property type="method" value="X-ray"/>
    <property type="resolution" value="2.10 A"/>
    <property type="chains" value="A=30-764"/>
</dbReference>
<dbReference type="PDB" id="3TEW">
    <property type="method" value="X-ray"/>
    <property type="resolution" value="1.45 A"/>
    <property type="chains" value="A=30-764"/>
</dbReference>
<dbReference type="PDB" id="3TEX">
    <property type="method" value="X-ray"/>
    <property type="resolution" value="1.70 A"/>
    <property type="chains" value="A=30-764"/>
</dbReference>
<dbReference type="PDB" id="3TEY">
    <property type="method" value="X-ray"/>
    <property type="resolution" value="2.12 A"/>
    <property type="chains" value="A=30-764"/>
</dbReference>
<dbReference type="PDB" id="3TEZ">
    <property type="method" value="X-ray"/>
    <property type="resolution" value="1.83 A"/>
    <property type="chains" value="A=30-764"/>
</dbReference>
<dbReference type="PDB" id="4EE2">
    <property type="method" value="X-ray"/>
    <property type="resolution" value="1.91 A"/>
    <property type="chains" value="A=30-764"/>
</dbReference>
<dbReference type="PDB" id="4H2A">
    <property type="method" value="X-ray"/>
    <property type="resolution" value="1.62 A"/>
    <property type="chains" value="A=30-764"/>
</dbReference>
<dbReference type="PDB" id="4NAM">
    <property type="method" value="X-ray"/>
    <property type="resolution" value="1.70 A"/>
    <property type="chains" value="A=30-764"/>
</dbReference>
<dbReference type="PDB" id="5FR3">
    <property type="method" value="X-ray"/>
    <property type="resolution" value="1.94 A"/>
    <property type="chains" value="A=43-764"/>
</dbReference>
<dbReference type="PDB" id="6PSN">
    <property type="method" value="EM"/>
    <property type="resolution" value="4.60 A"/>
    <property type="chains" value="A/B/C/D/E/F/G=197-764"/>
</dbReference>
<dbReference type="PDB" id="6UJI">
    <property type="method" value="X-ray"/>
    <property type="resolution" value="5.50 A"/>
    <property type="chains" value="A/B/C/D/E/F/G/H/I/J/K/L/M/N=197-764"/>
</dbReference>
<dbReference type="PDB" id="6UZB">
    <property type="method" value="EM"/>
    <property type="resolution" value="3.20 A"/>
    <property type="chains" value="A/B/C/D/E/F/G=30-764"/>
</dbReference>
<dbReference type="PDB" id="6UZD">
    <property type="method" value="EM"/>
    <property type="resolution" value="3.40 A"/>
    <property type="chains" value="A/B/C/D/E/F/G=30-764"/>
</dbReference>
<dbReference type="PDB" id="6UZE">
    <property type="method" value="EM"/>
    <property type="resolution" value="3.40 A"/>
    <property type="chains" value="A/B/C/D/E/F/G=30-764"/>
</dbReference>
<dbReference type="PDB" id="6VRA">
    <property type="method" value="EM"/>
    <property type="resolution" value="3.30 A"/>
    <property type="chains" value="A/B/C/D/E/F/G/H=33-764"/>
</dbReference>
<dbReference type="PDB" id="6WJJ">
    <property type="method" value="EM"/>
    <property type="resolution" value="3.80 A"/>
    <property type="chains" value="A/B/C/D/E/F/G/H=33-764"/>
</dbReference>
<dbReference type="PDB" id="6ZXJ">
    <property type="method" value="EM"/>
    <property type="resolution" value="3.50 A"/>
    <property type="chains" value="A/B/C/D/E/F/G=29-764"/>
</dbReference>
<dbReference type="PDB" id="6ZXK">
    <property type="method" value="EM"/>
    <property type="resolution" value="3.80 A"/>
    <property type="chains" value="A/B/C/D/E/F/G=29-764"/>
</dbReference>
<dbReference type="PDB" id="6ZXL">
    <property type="method" value="EM"/>
    <property type="resolution" value="4.20 A"/>
    <property type="chains" value="A/B/C/D/E/F/G=29-764"/>
</dbReference>
<dbReference type="PDB" id="7KXR">
    <property type="method" value="EM"/>
    <property type="resolution" value="3.30 A"/>
    <property type="chains" value="A/B/C/D/E/F/G=203-764"/>
</dbReference>
<dbReference type="PDB" id="7O85">
    <property type="method" value="EM"/>
    <property type="resolution" value="3.30 A"/>
    <property type="chains" value="A/D/G/J/M/P/S=203-643"/>
</dbReference>
<dbReference type="PDBsum" id="1ACC"/>
<dbReference type="PDBsum" id="1T6B"/>
<dbReference type="PDBsum" id="1TZN"/>
<dbReference type="PDBsum" id="1TZO"/>
<dbReference type="PDBsum" id="3ETB"/>
<dbReference type="PDBsum" id="3INO"/>
<dbReference type="PDBsum" id="3J9C"/>
<dbReference type="PDBsum" id="3KWV"/>
<dbReference type="PDBsum" id="3MHZ"/>
<dbReference type="PDBsum" id="3Q8A"/>
<dbReference type="PDBsum" id="3Q8B"/>
<dbReference type="PDBsum" id="3Q8C"/>
<dbReference type="PDBsum" id="3Q8E"/>
<dbReference type="PDBsum" id="3Q8F"/>
<dbReference type="PDBsum" id="3TEW"/>
<dbReference type="PDBsum" id="3TEX"/>
<dbReference type="PDBsum" id="3TEY"/>
<dbReference type="PDBsum" id="3TEZ"/>
<dbReference type="PDBsum" id="4EE2"/>
<dbReference type="PDBsum" id="4H2A"/>
<dbReference type="PDBsum" id="4NAM"/>
<dbReference type="PDBsum" id="5FR3"/>
<dbReference type="PDBsum" id="6PSN"/>
<dbReference type="PDBsum" id="6UJI"/>
<dbReference type="PDBsum" id="6UZB"/>
<dbReference type="PDBsum" id="6UZD"/>
<dbReference type="PDBsum" id="6UZE"/>
<dbReference type="PDBsum" id="6VRA"/>
<dbReference type="PDBsum" id="6WJJ"/>
<dbReference type="PDBsum" id="6ZXJ"/>
<dbReference type="PDBsum" id="6ZXK"/>
<dbReference type="PDBsum" id="6ZXL"/>
<dbReference type="PDBsum" id="7KXR"/>
<dbReference type="PDBsum" id="7O85"/>
<dbReference type="EMDB" id="EMD-11525"/>
<dbReference type="EMDB" id="EMD-12761"/>
<dbReference type="EMDB" id="EMD-20459"/>
<dbReference type="EMDB" id="EMD-20955"/>
<dbReference type="EMDB" id="EMD-20957"/>
<dbReference type="EMDB" id="EMD-20958"/>
<dbReference type="EMDB" id="EMD-21365"/>
<dbReference type="EMDB" id="EMD-21694"/>
<dbReference type="EMDB" id="EMD-23066"/>
<dbReference type="EMDB" id="EMD-6224"/>
<dbReference type="EMDB" id="EMD-6225"/>
<dbReference type="SMR" id="P13423"/>
<dbReference type="DIP" id="DIP-29841N"/>
<dbReference type="IntAct" id="P13423">
    <property type="interactions" value="16"/>
</dbReference>
<dbReference type="MINT" id="P13423"/>
<dbReference type="BindingDB" id="P13423"/>
<dbReference type="ChEMBL" id="CHEMBL5352"/>
<dbReference type="DrugBank" id="DB09057">
    <property type="generic name" value="Anthrax immune globulin human"/>
</dbReference>
<dbReference type="DrugBank" id="DB05336">
    <property type="generic name" value="Obiltoxaximab"/>
</dbReference>
<dbReference type="DrugBank" id="DB08902">
    <property type="generic name" value="Raxibacumab"/>
</dbReference>
<dbReference type="DrugCentral" id="P13423"/>
<dbReference type="TCDB" id="1.C.42.1.1">
    <property type="family name" value="the channel-forming bacillus anthracis protective antigen (bapa) family"/>
</dbReference>
<dbReference type="ABCD" id="P13423">
    <property type="antibodies" value="43 sequenced antibodies"/>
</dbReference>
<dbReference type="GeneID" id="45025512"/>
<dbReference type="KEGG" id="bar:GBAA_pXO1_0164"/>
<dbReference type="HOGENOM" id="CLU_015269_0_0_9"/>
<dbReference type="Reactome" id="R-HSA-5210891">
    <property type="pathway name" value="Uptake and function of anthrax toxins"/>
</dbReference>
<dbReference type="EvolutionaryTrace" id="P13423"/>
<dbReference type="PHI-base" id="PHI:11904"/>
<dbReference type="PHI-base" id="PHI:4090"/>
<dbReference type="PRO" id="PR:P13423"/>
<dbReference type="Proteomes" id="UP000000594">
    <property type="component" value="Plasmid pXO1"/>
</dbReference>
<dbReference type="GO" id="GO:0005576">
    <property type="term" value="C:extracellular region"/>
    <property type="evidence" value="ECO:0007669"/>
    <property type="project" value="UniProtKB-SubCell"/>
</dbReference>
<dbReference type="GO" id="GO:0044164">
    <property type="term" value="C:host cell cytosol"/>
    <property type="evidence" value="ECO:0000314"/>
    <property type="project" value="UniProtKB"/>
</dbReference>
<dbReference type="GO" id="GO:0044175">
    <property type="term" value="C:host cell endosome membrane"/>
    <property type="evidence" value="ECO:0007669"/>
    <property type="project" value="UniProtKB-SubCell"/>
</dbReference>
<dbReference type="GO" id="GO:0020002">
    <property type="term" value="C:host cell plasma membrane"/>
    <property type="evidence" value="ECO:0007669"/>
    <property type="project" value="UniProtKB-SubCell"/>
</dbReference>
<dbReference type="GO" id="GO:0016020">
    <property type="term" value="C:membrane"/>
    <property type="evidence" value="ECO:0007669"/>
    <property type="project" value="UniProtKB-KW"/>
</dbReference>
<dbReference type="GO" id="GO:0042802">
    <property type="term" value="F:identical protein binding"/>
    <property type="evidence" value="ECO:0000353"/>
    <property type="project" value="IntAct"/>
</dbReference>
<dbReference type="GO" id="GO:0046872">
    <property type="term" value="F:metal ion binding"/>
    <property type="evidence" value="ECO:0007669"/>
    <property type="project" value="UniProtKB-KW"/>
</dbReference>
<dbReference type="GO" id="GO:0090729">
    <property type="term" value="F:toxin activity"/>
    <property type="evidence" value="ECO:0007669"/>
    <property type="project" value="UniProtKB-KW"/>
</dbReference>
<dbReference type="GO" id="GO:0051260">
    <property type="term" value="P:protein homooligomerization"/>
    <property type="evidence" value="ECO:0007669"/>
    <property type="project" value="InterPro"/>
</dbReference>
<dbReference type="GO" id="GO:0141070">
    <property type="term" value="P:symbiont-mediated suppression of host MAPK cascade"/>
    <property type="evidence" value="ECO:0000316"/>
    <property type="project" value="UniProtKB"/>
</dbReference>
<dbReference type="FunFam" id="3.10.20.110:FF:000001">
    <property type="entry name" value="Protective antigen"/>
    <property type="match status" value="1"/>
</dbReference>
<dbReference type="FunFam" id="3.90.182.10:FF:000001">
    <property type="entry name" value="Protective antigen"/>
    <property type="match status" value="1"/>
</dbReference>
<dbReference type="Gene3D" id="2.60.40.810">
    <property type="match status" value="1"/>
</dbReference>
<dbReference type="Gene3D" id="3.10.20.110">
    <property type="match status" value="1"/>
</dbReference>
<dbReference type="Gene3D" id="2.60.120.240">
    <property type="entry name" value="Protective antigen, heptamerisation domain"/>
    <property type="match status" value="1"/>
</dbReference>
<dbReference type="Gene3D" id="3.90.182.10">
    <property type="entry name" value="Toxin - Anthrax Protective Antigen,domain 1"/>
    <property type="match status" value="1"/>
</dbReference>
<dbReference type="InterPro" id="IPR003896">
    <property type="entry name" value="Bacterial_exotoxin_B"/>
</dbReference>
<dbReference type="InterPro" id="IPR035331">
    <property type="entry name" value="Binary_toxB_3"/>
</dbReference>
<dbReference type="InterPro" id="IPR037524">
    <property type="entry name" value="PA14/GLEYA"/>
</dbReference>
<dbReference type="InterPro" id="IPR011658">
    <property type="entry name" value="PA14_dom"/>
</dbReference>
<dbReference type="InterPro" id="IPR035088">
    <property type="entry name" value="PA_Ca-bd"/>
</dbReference>
<dbReference type="InterPro" id="IPR027441">
    <property type="entry name" value="PA_dom_4"/>
</dbReference>
<dbReference type="InterPro" id="IPR027439">
    <property type="entry name" value="PA_heptamer_dom"/>
</dbReference>
<dbReference type="InterPro" id="IPR037149">
    <property type="entry name" value="PA_heptamer_dom_sf"/>
</dbReference>
<dbReference type="InterPro" id="IPR048853">
    <property type="entry name" value="PA_Ig-like"/>
</dbReference>
<dbReference type="Pfam" id="PF03495">
    <property type="entry name" value="Binary_toxB"/>
    <property type="match status" value="1"/>
</dbReference>
<dbReference type="Pfam" id="PF17475">
    <property type="entry name" value="Binary_toxB_2"/>
    <property type="match status" value="1"/>
</dbReference>
<dbReference type="Pfam" id="PF17476">
    <property type="entry name" value="Binary_toxB_3"/>
    <property type="match status" value="1"/>
</dbReference>
<dbReference type="Pfam" id="PF07691">
    <property type="entry name" value="PA14"/>
    <property type="match status" value="1"/>
</dbReference>
<dbReference type="Pfam" id="PF20835">
    <property type="entry name" value="PA_Ig-like"/>
    <property type="match status" value="1"/>
</dbReference>
<dbReference type="PRINTS" id="PR01391">
    <property type="entry name" value="BINARYTOXINB"/>
</dbReference>
<dbReference type="SMART" id="SM00758">
    <property type="entry name" value="PA14"/>
    <property type="match status" value="1"/>
</dbReference>
<dbReference type="SUPFAM" id="SSF56988">
    <property type="entry name" value="Anthrax protective antigen"/>
    <property type="match status" value="1"/>
</dbReference>
<dbReference type="PROSITE" id="PS51820">
    <property type="entry name" value="PA14"/>
    <property type="match status" value="1"/>
</dbReference>
<geneLocation type="plasmid">
    <name>pXO1</name>
</geneLocation>
<organism>
    <name type="scientific">Bacillus anthracis</name>
    <dbReference type="NCBI Taxonomy" id="1392"/>
    <lineage>
        <taxon>Bacteria</taxon>
        <taxon>Bacillati</taxon>
        <taxon>Bacillota</taxon>
        <taxon>Bacilli</taxon>
        <taxon>Bacillales</taxon>
        <taxon>Bacillaceae</taxon>
        <taxon>Bacillus</taxon>
        <taxon>Bacillus cereus group</taxon>
    </lineage>
</organism>
<reference key="1">
    <citation type="journal article" date="1988" name="Gene">
        <title>Sequence and analysis of the DNA encoding protective antigen of Bacillus anthracis.</title>
        <authorList>
            <person name="Welkos S.L."/>
            <person name="Lowe J.R."/>
            <person name="Eden-Mccutchan F."/>
            <person name="Vodkin M."/>
            <person name="Leppla S.H."/>
            <person name="Schmidt J.J."/>
        </authorList>
    </citation>
    <scope>NUCLEOTIDE SEQUENCE [GENOMIC DNA]</scope>
</reference>
<reference key="2">
    <citation type="journal article" date="1999" name="J. Bacteriol.">
        <title>Genetic diversity in the protective antigen gene of Bacillus anthracis.</title>
        <authorList>
            <person name="Price L.B."/>
            <person name="Hugh-Jones M."/>
            <person name="Jackson P.J."/>
            <person name="Keim P."/>
        </authorList>
    </citation>
    <scope>NUCLEOTIDE SEQUENCE [GENOMIC DNA]</scope>
    <source>
        <strain>28</strain>
        <strain>33</strain>
        <strain>BA1024</strain>
        <strain>BA1035</strain>
    </source>
</reference>
<reference key="3">
    <citation type="journal article" date="2000" name="Infect. Immun.">
        <title>Attenuated nontoxinogenic and nonencapsulated recombinant Bacillus anthracis spore vaccines protect against anthrax.</title>
        <authorList>
            <person name="Cohen S."/>
            <person name="Mendelson I."/>
            <person name="Altboum Z."/>
            <person name="Kobiler D."/>
            <person name="Elhanany E."/>
            <person name="Bino T."/>
            <person name="Leitner M."/>
            <person name="Inbar I."/>
            <person name="Rosenberg H."/>
            <person name="Gozes Y."/>
            <person name="Barak R."/>
            <person name="Fisher M."/>
            <person name="Kronman C."/>
            <person name="Velan B."/>
            <person name="Shafferman A."/>
        </authorList>
    </citation>
    <scope>NUCLEOTIDE SEQUENCE [GENOMIC DNA]</scope>
    <source>
        <strain>V770-NP1-R / ATCC 14185</strain>
    </source>
</reference>
<reference key="4">
    <citation type="journal article" date="1999" name="J. Bacteriol.">
        <title>Sequence and organization of pXO1, the large Bacillus anthracis plasmid harboring the anthrax toxin genes.</title>
        <authorList>
            <person name="Okinaka R.T."/>
            <person name="Cloud K."/>
            <person name="Hampton O."/>
            <person name="Hoffmaster A.R."/>
            <person name="Hill K.K."/>
            <person name="Keim P."/>
            <person name="Koehler T.M."/>
            <person name="Lamke G."/>
            <person name="Kumano S."/>
            <person name="Mahillon J."/>
            <person name="Manter D."/>
            <person name="Martinez Y."/>
            <person name="Ricke D."/>
            <person name="Svensson R."/>
            <person name="Jackson P.J."/>
        </authorList>
    </citation>
    <scope>NUCLEOTIDE SEQUENCE [LARGE SCALE GENOMIC DNA]</scope>
    <source>
        <strain>Sterne</strain>
    </source>
</reference>
<reference key="5">
    <citation type="journal article" date="2002" name="Science">
        <title>Comparative genome sequencing for discovery of novel polymorphisms in Bacillus anthracis.</title>
        <authorList>
            <person name="Read T.D."/>
            <person name="Salzberg S.L."/>
            <person name="Pop M."/>
            <person name="Shumway M.F."/>
            <person name="Umayam L."/>
            <person name="Jiang L."/>
            <person name="Holtzapple E."/>
            <person name="Busch J.D."/>
            <person name="Smith K.L."/>
            <person name="Schupp J.M."/>
            <person name="Solomon D."/>
            <person name="Keim P."/>
            <person name="Fraser C.M."/>
        </authorList>
    </citation>
    <scope>NUCLEOTIDE SEQUENCE [GENOMIC DNA]</scope>
    <source>
        <strain>Ames / isolate Florida / A2012</strain>
    </source>
</reference>
<reference key="6">
    <citation type="journal article" date="2009" name="J. Bacteriol.">
        <title>The complete genome sequence of Bacillus anthracis Ames 'Ancestor'.</title>
        <authorList>
            <person name="Ravel J."/>
            <person name="Jiang L."/>
            <person name="Stanley S.T."/>
            <person name="Wilson M.R."/>
            <person name="Decker R.S."/>
            <person name="Read T.D."/>
            <person name="Worsham P."/>
            <person name="Keim P.S."/>
            <person name="Salzberg S.L."/>
            <person name="Fraser-Liggett C.M."/>
            <person name="Rasko D.A."/>
        </authorList>
    </citation>
    <scope>NUCLEOTIDE SEQUENCE [LARGE SCALE GENOMIC DNA]</scope>
    <source>
        <strain>Ames ancestor</strain>
    </source>
</reference>
<reference key="7">
    <citation type="journal article" date="2002" name="J. Appl. Microbiol.">
        <title>Sequence analysis of the genes encoding for the major virulence factors of Bacillus anthracis vaccine strain 'Carbosap'.</title>
        <authorList>
            <person name="Adone R."/>
            <person name="Pasquali P."/>
            <person name="La Rosa G."/>
            <person name="Marianelli C."/>
            <person name="Muscillo M."/>
            <person name="Fasanella A."/>
            <person name="Francia M."/>
            <person name="Ciuchini F."/>
        </authorList>
    </citation>
    <scope>NUCLEOTIDE SEQUENCE [GENOMIC DNA] OF 9-751</scope>
    <source>
        <strain>Carbosap</strain>
        <strain>Ferrara</strain>
    </source>
</reference>
<reference key="8">
    <citation type="journal article" date="2004" name="Jpn. J. Infect. Dis.">
        <title>Preparation of a positive control DNA for molecular diagnosis of Bacillus anthracis.</title>
        <authorList>
            <person name="Inoue S."/>
            <person name="Noguchi A."/>
            <person name="Tanabayashi K."/>
            <person name="Yamada A."/>
        </authorList>
    </citation>
    <scope>NUCLEOTIDE SEQUENCE [GENOMIC DNA] OF 195-434</scope>
    <source>
        <strain>PAI</strain>
    </source>
</reference>
<reference key="9">
    <citation type="journal article" date="1991" name="J. Biol. Chem.">
        <title>The carboxyl-terminal end of protective antigen is required for receptor binding and anthrax toxin activity.</title>
        <authorList>
            <person name="Singh Y."/>
            <person name="Klimpel K.R."/>
            <person name="Quinn C.P."/>
            <person name="Chaudhary V.K."/>
            <person name="Leppla S.H."/>
        </authorList>
    </citation>
    <scope>FUNCTION</scope>
    <scope>DOMAINS</scope>
</reference>
<reference key="10">
    <citation type="journal article" date="1992" name="J. Biol. Chem.">
        <title>Human furin is a calcium-dependent serine endoprotease that recognizes the sequence Arg-X-X-Arg and efficiently cleaves anthrax toxin protective antigen.</title>
        <authorList>
            <person name="Molloy S.S."/>
            <person name="Bresnahan P.A."/>
            <person name="Leppla S.H."/>
            <person name="Klimpel K.R."/>
            <person name="Thomas G."/>
        </authorList>
    </citation>
    <scope>PROTEOLYTIC CLEAVAGE</scope>
</reference>
<reference key="11">
    <citation type="journal article" date="1992" name="J. Biol. Chem.">
        <title>Functional characterization of protease-treated Bacillus anthracis protective antigen.</title>
        <authorList>
            <person name="Novak J.M."/>
            <person name="Stein M.P."/>
            <person name="Little S.F."/>
            <person name="Leppla S.H."/>
            <person name="Friedlander A.M."/>
        </authorList>
    </citation>
    <scope>PROTEOLYTIC CLEAVAGE</scope>
</reference>
<reference key="12">
    <citation type="journal article" date="1992" name="Proc. Natl. Acad. Sci. U.S.A.">
        <title>Anthrax toxin protective antigen is activated by a cell surface protease with the sequence specificity and catalytic properties of furin.</title>
        <authorList>
            <person name="Klimpel K.R."/>
            <person name="Molloy S.S."/>
            <person name="Thomas G."/>
            <person name="Leppla S.H."/>
        </authorList>
    </citation>
    <scope>PROTEOLYTIC CLEAVAGE</scope>
    <scope>MUTAGENESIS OF 193-ARG--ARG-196; ARG-193; 194-LYS--ARG-196 AND 194-LYS-LYS-195</scope>
</reference>
<reference key="13">
    <citation type="journal article" date="1994" name="J. Bacteriol.">
        <title>Regulation of the Bacillus anthracis protective antigen gene: CO2 and a trans-acting element activate transcription from one of two promoters.</title>
        <authorList>
            <person name="Koehler T.M."/>
            <person name="Dai Z."/>
            <person name="Kaufman-Yarbray M."/>
        </authorList>
    </citation>
    <scope>FUNCTION</scope>
    <source>
        <strain>Weybridge</strain>
    </source>
</reference>
<reference key="14">
    <citation type="journal article" date="1994" name="J. Biol. Chem.">
        <title>The chymotrypsin-sensitive site, FFD315, in anthrax toxin protective antigen is required for translocation of lethal factor.</title>
        <authorList>
            <person name="Singh Y."/>
            <person name="Klimpel K.R."/>
            <person name="Arora N."/>
            <person name="Sharma M."/>
            <person name="Leppla S.H."/>
        </authorList>
    </citation>
    <scope>PROTEOLYTIC CLEAVAGE</scope>
    <scope>MUTAGENESIS OF PHE-342; 342-PHE-PHE-343; ASP-344 AND SER-719</scope>
    <source>
        <strain>Sterne</strain>
    </source>
</reference>
<reference key="15">
    <citation type="journal article" date="1994" name="J. Biol. Chem.">
        <title>Anthrax protective antigen forms oligomers during intoxication of mammalian cells.</title>
        <authorList>
            <person name="Milne J.C."/>
            <person name="Furlong D."/>
            <person name="Hanna P.C."/>
            <person name="Wall J.S."/>
            <person name="Collier R.J."/>
        </authorList>
    </citation>
    <scope>PROTEOLYTIC CLEAVAGE</scope>
    <scope>SUBUNIT</scope>
    <source>
        <strain>Sterne</strain>
    </source>
</reference>
<reference key="16">
    <citation type="journal article" date="1999" name="Infect. Immun.">
        <title>Oligomerization of anthrax toxin protective antigen and binding of lethal factor during endocytic uptake into mammalian cells.</title>
        <authorList>
            <person name="Singh Y."/>
            <person name="Klimpel K.R."/>
            <person name="Goel S."/>
            <person name="Swain P.K."/>
            <person name="Leppla S.H."/>
        </authorList>
    </citation>
    <scope>FUNCTION (PROTECTIVE ANTIGEN PA-63)</scope>
    <scope>INTERACTION WITH LF (PROTECTIVE ANTIGEN PA-63)</scope>
    <scope>SUBUNIT (PROTECTIVE ANTIGEN PA-63)</scope>
    <scope>SUBCELLULAR LOCATION (PROTECTIVE ANTIGEN PA-63)</scope>
</reference>
<reference key="17">
    <citation type="journal article" date="1999" name="Infect. Immun.">
        <title>Identification of a receptor-binding region within domain 4 of the protective antigen component of anthrax toxin.</title>
        <authorList>
            <person name="Varughese M."/>
            <person name="Teixeira A.V."/>
            <person name="Liu S."/>
            <person name="Leppla S.H."/>
        </authorList>
    </citation>
    <scope>DOMAIN</scope>
    <source>
        <strain>Sterne</strain>
    </source>
</reference>
<reference key="18">
    <citation type="journal article" date="2000" name="Cell. Microbiol.">
        <title>Proteolytic activation of receptor-bound anthrax protective antigen on macrophages promotes its internalization.</title>
        <authorList>
            <person name="Beauregard K.E."/>
            <person name="Collier R.J."/>
            <person name="Swanson J.A."/>
        </authorList>
    </citation>
    <scope>PROTEOLYTIC CLEAVAGE</scope>
    <scope>SUBCELLULAR LOCATION</scope>
</reference>
<reference key="19">
    <citation type="journal article" date="2001" name="Biochem. Biophys. Res. Commun.">
        <title>Trp 346 and Leu 352 residues in protective antigen are required for the expression of anthrax lethal toxin activity.</title>
        <authorList>
            <person name="Batra S."/>
            <person name="Gupta P."/>
            <person name="Chauhan V."/>
            <person name="Singh A."/>
            <person name="Bhatnagar R."/>
        </authorList>
    </citation>
    <scope>MUTAGENESIS OF TRP-375; MET-379 AND LEU-381</scope>
    <source>
        <strain>Sterne</strain>
    </source>
</reference>
<reference key="20">
    <citation type="journal article" date="2001" name="Biochem. Biophys. Res. Commun.">
        <title>Hydrophobic residues Phe552, Phe554, Ile562, Leu566, and Ile574 are required for oligomerization of anthrax protective antigen.</title>
        <authorList>
            <person name="Ahuja N."/>
            <person name="Kumar P."/>
            <person name="Bhatnagar R."/>
        </authorList>
    </citation>
    <scope>MUTAGENESIS OF PHE-581; PHE-583; ILE-591; LEU-595 AND ILE-603</scope>
    <source>
        <strain>Sterne</strain>
    </source>
</reference>
<reference key="21">
    <citation type="journal article" date="2001" name="FEMS Microbiol. Lett.">
        <title>Role of residues constituting the 2beta1 strand of domain II in the biological activity of anthrax protective antigen.</title>
        <authorList>
            <person name="Khanna H."/>
            <person name="Chopra A.P."/>
            <person name="Arora N."/>
            <person name="Chaudhry A."/>
            <person name="Singh Y."/>
        </authorList>
    </citation>
    <scope>MUTAGENESIS OF PRO-289</scope>
    <source>
        <strain>Sterne</strain>
    </source>
</reference>
<reference key="22">
    <citation type="journal article" date="2001" name="J. Bacteriol.">
        <title>Involvement of domain 3 in oligomerization by the protective antigen moiety of anthrax toxin.</title>
        <authorList>
            <person name="Mogridge J."/>
            <person name="Mourez M."/>
            <person name="Collier R.J."/>
        </authorList>
    </citation>
    <scope>MUTAGENESIS OF GLN-512; ASP-541; LEU-543 AND ARG-621</scope>
</reference>
<reference key="23">
    <citation type="journal article" date="2001" name="J. Biol. Chem.">
        <title>Point mutations in anthrax protective antigen that block translocation.</title>
        <authorList>
            <person name="Sellman B.R."/>
            <person name="Nassi S."/>
            <person name="Collier R.J."/>
        </authorList>
    </citation>
    <scope>MUTAGENESIS OF LYS-426; ASP-454 AND PHE-456</scope>
</reference>
<reference key="24">
    <citation type="journal article" date="2001" name="Nature">
        <title>Identification of the cellular receptor for anthrax toxin.</title>
        <authorList>
            <person name="Bradley K.A."/>
            <person name="Mogridge J."/>
            <person name="Mourez M."/>
            <person name="Collier R.J."/>
            <person name="Young J.A.T."/>
        </authorList>
    </citation>
    <scope>FUNCTION</scope>
    <scope>INTERACTION WITH HOST ANTXR1</scope>
    <scope>SUBCELLULAR LOCATION (PROTECTIVE ANTIGEN)</scope>
</reference>
<reference key="25">
    <citation type="journal article" date="2001" name="Annu. Rev. Microbiol.">
        <title>Anthrax.</title>
        <authorList>
            <person name="Mock M."/>
            <person name="Fouet A."/>
        </authorList>
    </citation>
    <scope>REVIEW</scope>
</reference>
<reference key="26">
    <citation type="journal article" date="2002" name="Infect. Immun.">
        <title>Identification of amino acid residues of anthrax protective antigen involved in binding with lethal factor.</title>
        <authorList>
            <person name="Chauhan V."/>
            <person name="Bhatnagar R."/>
        </authorList>
    </citation>
    <scope>FUNCTION (PROTECTIVE ANTIGEN PA-63)</scope>
    <scope>INTERACTION WITH LF (PROTECTIVE ANTIGEN PA-63)</scope>
    <scope>MUTAGENESIS OF PRO-213; LEU-216; PHE-231; LEU-232; PRO-234; ILE-236; ILE-239; TRP-255 AND PHE-265</scope>
    <source>
        <strain>Sterne</strain>
    </source>
</reference>
<reference key="27">
    <citation type="journal article" date="2003" name="J. Biol. Chem.">
        <title>Production of Bacillus anthracis protective antigen is dependent on the extracellular chaperone, PrsA.</title>
        <authorList>
            <person name="Williams R.C."/>
            <person name="Rees M.L."/>
            <person name="Jacobs M.F."/>
            <person name="Pragai Z."/>
            <person name="Thwaite J.E."/>
            <person name="Baillie L.W."/>
            <person name="Emmerson P.T."/>
            <person name="Harwood C.R."/>
        </authorList>
    </citation>
    <scope>SUBCELLULAR LOCATION</scope>
</reference>
<reference key="28">
    <citation type="journal article" date="2003" name="J. Biol. Chem.">
        <title>Alanine-scanning mutations in domain 4 of anthrax toxin protective antigen reveal residues important for binding to the cellular receptor and to a neutralizing monoclonal antibody.</title>
        <authorList>
            <person name="Rosovitz M.J."/>
            <person name="Schuck P."/>
            <person name="Varughese M."/>
            <person name="Chopra A.P."/>
            <person name="Mehra V."/>
            <person name="Singh Y."/>
            <person name="McGinnis L.M."/>
            <person name="Leppla S.H."/>
        </authorList>
    </citation>
    <scope>MUTAGENESIS OF ASN-686; LYS-708; LYS-709; TYR-710; ASN-711; ASP-712; LYS-713; LEU-714; PRO-715; LEU-716; TYR-717; ILE-718; ASN-720; PRO-721 AND ASN-722</scope>
</reference>
<reference key="29">
    <citation type="journal article" date="2003" name="J. Biol. Chem.">
        <title>Binding of anthrax toxin to its receptor is similar to alpha integrin-ligand interactions.</title>
        <authorList>
            <person name="Bradley K.A."/>
            <person name="Mogridge J."/>
            <person name="Jonah G."/>
            <person name="Rainey G.J.A."/>
            <person name="Batty S."/>
            <person name="Young J.A.T."/>
        </authorList>
    </citation>
    <scope>FUNCTION</scope>
    <scope>INTERACTION WITH HOST ANTXR1</scope>
    <scope>SUBCELLULAR LOCATION (PROTECTIVE ANTIGEN)</scope>
</reference>
<reference key="30">
    <citation type="journal article" date="2003" name="J. Cell Biol.">
        <title>Anthrax toxin triggers endocytosis of its receptor via a lipid raft-mediated clathrin-dependent process.</title>
        <authorList>
            <person name="Abrami L."/>
            <person name="Liu S."/>
            <person name="Cosson P."/>
            <person name="Leppla S.H."/>
            <person name="van der Goot F.G."/>
        </authorList>
    </citation>
    <scope>FUNCTION (PROTECTIVE ANTIGEN PA-63)</scope>
</reference>
<reference key="31">
    <citation type="journal article" date="2003" name="Proc. Natl. Acad. Sci. U.S.A.">
        <title>Mapping dominant-negative mutations of anthrax protective antigen by scanning mutagenesis.</title>
        <authorList>
            <person name="Mourez M."/>
            <person name="Yan M."/>
            <person name="Lacy D.B."/>
            <person name="Dillon L."/>
            <person name="Bentsen L."/>
            <person name="Marpoe A."/>
            <person name="Maurin C."/>
            <person name="Hotze E."/>
            <person name="Wigelsworth D."/>
            <person name="Pimental R.-A."/>
            <person name="Ballard J.D."/>
            <person name="Collier R.J."/>
            <person name="Tweten R.K."/>
        </authorList>
    </citation>
    <scope>MUTAGENESIS OF ILE-393; THR-409; SER-411; THR-422; LYS-426; ASN-428; TYR-440; ASN-451; ASP-454 AND PHE-456</scope>
</reference>
<reference key="32">
    <citation type="journal article" date="2004" name="Biochem. Biophys. Res. Commun.">
        <title>Anthrax toxin complexes: heptameric protective antigen can bind lethal factor and edema factor simultaneously.</title>
        <authorList>
            <person name="Pimental R.A."/>
            <person name="Christensen K.A."/>
            <person name="Krantz B.A."/>
            <person name="Collier R.J."/>
        </authorList>
    </citation>
    <scope>FUNCTION (PROTECTIVE ANTIGEN PA-63)</scope>
    <scope>INTERACTION WITH LF AND EF (PROTECTIVE ANTIGEN PA-63)</scope>
    <scope>SUBCELLULAR LOCATION</scope>
</reference>
<reference key="33">
    <citation type="journal article" date="2005" name="Science">
        <title>A phenylalanine clamp catalyzes protein translocation through the anthrax toxin pore.</title>
        <authorList>
            <person name="Krantz B.A."/>
            <person name="Melnyk R.A."/>
            <person name="Zhang S."/>
            <person name="Juris S.J."/>
            <person name="Lacy D.B."/>
            <person name="Wu Z."/>
            <person name="Finkelstein A."/>
            <person name="Collier R.J."/>
        </authorList>
    </citation>
    <scope>FUNCTION (PROTECTIVE ANTIGEN PA-63)</scope>
    <scope>SUBUNIT (PROTECTIVE ANTIGEN PA-63)</scope>
    <scope>DOMAIN (PROTECTIVE ANTIGEN PA-63)</scope>
    <scope>SUBCELLULAR LOCATION (PROTECTIVE ANTIGEN PA-63)</scope>
    <scope>MUTAGENESIS OF PHE-456</scope>
</reference>
<reference key="34">
    <citation type="journal article" date="2009" name="J. Mol. Biol.">
        <title>The protective antigen component of anthrax toxin forms functional octameric complexes.</title>
        <authorList>
            <person name="Kintzer A.F."/>
            <person name="Thoren K.L."/>
            <person name="Sterling H.J."/>
            <person name="Dong K.C."/>
            <person name="Feld G.K."/>
            <person name="Tang I.I."/>
            <person name="Zhang T.T."/>
            <person name="Williams E.R."/>
            <person name="Berger J.M."/>
            <person name="Krantz B.A."/>
        </authorList>
    </citation>
    <scope>SUBUNIT (PROTECTIVE ANTIGEN PA-63)</scope>
</reference>
<reference key="35">
    <citation type="journal article" date="2010" name="J. Mol. Biol.">
        <title>Role of the protective antigen octamer in the molecular mechanism of anthrax lethal toxin stabilization in plasma.</title>
        <authorList>
            <person name="Kintzer A.F."/>
            <person name="Sterling H.J."/>
            <person name="Tang I.I."/>
            <person name="Abdul-Gader A."/>
            <person name="Miles A.J."/>
            <person name="Wallace B.A."/>
            <person name="Williams E.R."/>
            <person name="Krantz B.A."/>
        </authorList>
    </citation>
    <scope>SUBUNIT (PROTECTIVE ANTIGEN PA-63)</scope>
</reference>
<reference key="36">
    <citation type="journal article" date="2010" name="PLoS Pathog.">
        <title>Endocytosis of the anthrax toxin is mediated by clathrin, actin and unconventional adaptors.</title>
        <authorList>
            <person name="Abrami L."/>
            <person name="Bischofberger M."/>
            <person name="Kunz B."/>
            <person name="Groux R."/>
            <person name="van der Goot F.G."/>
        </authorList>
    </citation>
    <scope>SUBCELLULAR LOCATION (PROTECTIVE ANTIGEN PA-63)</scope>
</reference>
<reference evidence="51" key="37">
    <citation type="journal article" date="1997" name="Nature">
        <title>Crystal structure of the anthrax toxin protective antigen.</title>
        <authorList>
            <person name="Petosa C."/>
            <person name="Collier R.J."/>
            <person name="Klimpel K.R."/>
            <person name="Leppla S.H."/>
            <person name="Liddington R.C."/>
        </authorList>
    </citation>
    <scope>X-RAY CRYSTALLOGRAPHY (2.1 ANGSTROMS) IN COMPLEX WITH CALCIUM</scope>
    <scope>DOMAIN</scope>
</reference>
<reference evidence="52" key="38">
    <citation type="journal article" date="2004" name="Nature">
        <title>Crystal structure of a complex between anthrax toxin and its host cell receptor.</title>
        <authorList>
            <person name="Santelli E."/>
            <person name="Bankston L.A."/>
            <person name="Leppla S.H."/>
            <person name="Liddington R.C."/>
        </authorList>
    </citation>
    <scope>X-RAY CRYSTALLOGRAPHY (2.5 ANGSTROMS) OF 30-764 IN COMPLEX WITH HOST ANTXR2 AND CALCIUM</scope>
    <scope>FUNCTION</scope>
</reference>
<reference evidence="53 54" key="39">
    <citation type="journal article" date="2004" name="Proc. Natl. Acad. Sci. U.S.A.">
        <title>Structure of heptameric protective antigen bound to an anthrax toxin receptor: a role for receptor in pH-dependent pore formation.</title>
        <authorList>
            <person name="Lacy D.B."/>
            <person name="Wigelsworth D.J."/>
            <person name="Melnyk R.A."/>
            <person name="Harrison S.C."/>
            <person name="Collier R.J."/>
        </authorList>
    </citation>
    <scope>X-RAY CRYSTALLOGRAPHY (4.3 ANGSTROMS) OF 203-764 IN COMPLEX WITH HOST ANTXR2 AND CALCIUM</scope>
    <scope>FUNCTION</scope>
</reference>
<reference evidence="56" key="40">
    <citation type="journal article" date="2010" name="Nat. Struct. Mol. Biol.">
        <title>Structural basis for the unfolding of anthrax lethal factor by protective antigen oligomers.</title>
        <authorList>
            <person name="Feld G.K."/>
            <person name="Thoren K.L."/>
            <person name="Kintzer A.F."/>
            <person name="Sterling H.J."/>
            <person name="Tang I.I."/>
            <person name="Greenberg S.G."/>
            <person name="Williams E.R."/>
            <person name="Krantz B.A."/>
        </authorList>
    </citation>
    <scope>X-RAY CRYSTALLOGRAPHY (3.10 ANGSTROMS) OF 197-764 IN COMPLEX WITH EF AND CALCIUM</scope>
    <scope>FUNCTION (PROTECTIVE ANTIGEN PA-63)</scope>
    <scope>DOMAIN (PROTECTIVE ANTIGEN PA-63)</scope>
    <scope>INTERACTION WITH LF (PROTECTIVE ANTIGEN PA-63)</scope>
    <scope>MUTAGENESIS OF ARG-207; ARG-229; PHE-231; PRO-234; ILE-236; HIS-240 AND PHE-265</scope>
</reference>
<reference evidence="55" key="41">
    <citation type="journal article" date="2015" name="Nature">
        <title>Atomic structure of anthrax protective antigen pore elucidates toxin translocation.</title>
        <authorList>
            <person name="Jiang J."/>
            <person name="Pentelute B.L."/>
            <person name="Collier R.J."/>
            <person name="Zhou Z.H."/>
        </authorList>
    </citation>
    <scope>STRUCTURE BY ELECTRON MICROSCOPY (2.90 ANGSTROMS) OF 203-764 IN COMPLEX WITH CALCIUM</scope>
    <scope>DOMAIN (PROTECTIVE ANTIGEN PA-63)</scope>
    <scope>SUBCELLULAR LOCATION (PROTECTIVE ANTIGEN PA-63)</scope>
    <scope>SUBUNIT (PROTECTIVE ANTIGEN PA-63)</scope>
</reference>
<reference evidence="57 58 59 60" key="42">
    <citation type="journal article" date="2020" name="Nat. Commun.">
        <title>Atomic structures of anthrax toxin protective antigen channels bound to partially unfolded lethal and edema factors.</title>
        <authorList>
            <person name="Hardenbrook N.J."/>
            <person name="Liu S."/>
            <person name="Zhou K."/>
            <person name="Ghosal K."/>
            <person name="Hong Zhou Z."/>
            <person name="Krantz B.A."/>
        </authorList>
    </citation>
    <scope>STRUCTURE BY ELECTRON MICROSCOPY (3.20 ANGSTROMS) OF 203-764 IN COMPLEX WITH CALCIUM; LF AND EF</scope>
    <scope>INTERACTION WITH LF AND EF (PROTECTIVE ANTIGEN PA-63)</scope>
    <scope>FUNCTION (PROTECTIVE ANTIGEN PA-63)</scope>
    <scope>DOMAIN (PROTECTIVE ANTIGEN PA-63)</scope>
</reference>
<reference evidence="63 64 65" key="43">
    <citation type="journal article" date="2020" name="PLoS Pathog.">
        <title>Cryo-EM structure of the fully-loaded asymmetric anthrax lethal toxin in its heptameric pre-pore state.</title>
        <authorList>
            <person name="Antoni C."/>
            <person name="Quentin D."/>
            <person name="Lang A.E."/>
            <person name="Aktories K."/>
            <person name="Gatsogiannis C."/>
            <person name="Raunser S."/>
        </authorList>
    </citation>
    <scope>STRUCTURE BY ELECTRON MICROSCOPY (3.50 ANGSTROMS) OF 202-764 IN COMPLEX WITH LF</scope>
    <scope>INTERACTION WITH LF (PROTECTIVE ANTIGEN PA-63)</scope>
    <scope>SUBUNIT (PROTECTIVE ANTIGEN PA-63)</scope>
    <scope>FUNCTION (PROTECTIVE ANTIGEN PA-63)</scope>
</reference>
<reference evidence="61 62" key="44">
    <citation type="journal article" date="2020" name="Structure">
        <title>Atomic structures of anthrax prechannel bound with full-length Lethal and Edema factors.</title>
        <authorList>
            <person name="Zhou K."/>
            <person name="Liu S."/>
            <person name="Hardenbrook N.J."/>
            <person name="Cui Y."/>
            <person name="Krantz B.A."/>
            <person name="Zhou Z.H."/>
        </authorList>
    </citation>
    <scope>STRUCTURE BY ELECTRON MICROSCOPY (3.30 ANGSTROMS) OF 203-764 IN COMPLEX WITH CALCIUM; LF AND EF</scope>
    <scope>INTERACTION WITH LF AND EF (PROTECTIVE ANTIGEN PA-63)</scope>
    <scope>FUNCTION (PROTECTIVE ANTIGEN PA-63)</scope>
    <scope>DOMAIN (PROTECTIVE ANTIGEN PA-63)</scope>
</reference>